<accession>Q13085</accession>
<accession>B2RP68</accession>
<accession>B2ZZ90</accession>
<accession>Q6KEV6</accession>
<accession>Q6XDA8</accession>
<accession>Q7Z2G8</accession>
<accession>Q7Z561</accession>
<accession>Q7Z563</accession>
<accession>Q7Z564</accession>
<accession>Q86WB2</accession>
<accession>Q86WB3</accession>
<gene>
    <name evidence="28" type="primary">ACACA</name>
    <name type="synonym">ACAC</name>
    <name type="synonym">ACC1</name>
    <name type="synonym">ACCA</name>
</gene>
<name>ACACA_HUMAN</name>
<proteinExistence type="evidence at protein level"/>
<protein>
    <recommendedName>
        <fullName evidence="21">Acetyl-CoA carboxylase 1</fullName>
        <shortName>ACC1</shortName>
        <ecNumber evidence="16 17 18">6.4.1.2</ecNumber>
    </recommendedName>
    <alternativeName>
        <fullName>Acetyl-Coenzyme A carboxylase alpha</fullName>
        <shortName>ACC-alpha</shortName>
    </alternativeName>
</protein>
<dbReference type="EC" id="6.4.1.2" evidence="16 17 18"/>
<dbReference type="EMBL" id="U19822">
    <property type="protein sequence ID" value="AAC50139.1"/>
    <property type="molecule type" value="mRNA"/>
</dbReference>
<dbReference type="EMBL" id="AY315619">
    <property type="protein sequence ID" value="AAP94114.1"/>
    <property type="molecule type" value="mRNA"/>
</dbReference>
<dbReference type="EMBL" id="AY315620">
    <property type="protein sequence ID" value="AAP94115.1"/>
    <property type="molecule type" value="mRNA"/>
</dbReference>
<dbReference type="EMBL" id="AY315621">
    <property type="protein sequence ID" value="AAP94116.1"/>
    <property type="molecule type" value="mRNA"/>
</dbReference>
<dbReference type="EMBL" id="AY315623">
    <property type="protein sequence ID" value="AAP94118.1"/>
    <property type="molecule type" value="mRNA"/>
</dbReference>
<dbReference type="EMBL" id="AY315627">
    <property type="protein sequence ID" value="AAP94122.1"/>
    <property type="molecule type" value="mRNA"/>
</dbReference>
<dbReference type="EMBL" id="AY237919">
    <property type="protein sequence ID" value="AAP69841.1"/>
    <property type="molecule type" value="mRNA"/>
</dbReference>
<dbReference type="EMBL" id="AB371587">
    <property type="protein sequence ID" value="BAG48316.1"/>
    <property type="molecule type" value="mRNA"/>
</dbReference>
<dbReference type="EMBL" id="CH471199">
    <property type="protein sequence ID" value="EAW57582.1"/>
    <property type="molecule type" value="Genomic_DNA"/>
</dbReference>
<dbReference type="EMBL" id="CH471199">
    <property type="protein sequence ID" value="EAW57577.1"/>
    <property type="molecule type" value="Genomic_DNA"/>
</dbReference>
<dbReference type="EMBL" id="CH471199">
    <property type="protein sequence ID" value="EAW57578.1"/>
    <property type="molecule type" value="Genomic_DNA"/>
</dbReference>
<dbReference type="EMBL" id="CH471199">
    <property type="protein sequence ID" value="EAW57581.1"/>
    <property type="molecule type" value="Genomic_DNA"/>
</dbReference>
<dbReference type="EMBL" id="BC137287">
    <property type="protein sequence ID" value="AAI37288.1"/>
    <property type="molecule type" value="mRNA"/>
</dbReference>
<dbReference type="EMBL" id="AJ534888">
    <property type="protein sequence ID" value="CAD59556.1"/>
    <property type="molecule type" value="mRNA"/>
</dbReference>
<dbReference type="EMBL" id="AJ534889">
    <property type="protein sequence ID" value="CAD59557.1"/>
    <property type="molecule type" value="mRNA"/>
</dbReference>
<dbReference type="EMBL" id="AJ564444">
    <property type="protein sequence ID" value="CAD92089.1"/>
    <property type="molecule type" value="mRNA"/>
</dbReference>
<dbReference type="CCDS" id="CCDS11317.1">
    <molecule id="Q13085-1"/>
</dbReference>
<dbReference type="CCDS" id="CCDS11318.1">
    <molecule id="Q13085-2"/>
</dbReference>
<dbReference type="CCDS" id="CCDS42302.1">
    <molecule id="Q13085-4"/>
</dbReference>
<dbReference type="CCDS" id="CCDS42303.1">
    <molecule id="Q13085-3"/>
</dbReference>
<dbReference type="PIR" id="I38928">
    <property type="entry name" value="I38928"/>
</dbReference>
<dbReference type="RefSeq" id="NP_942131.1">
    <molecule id="Q13085-4"/>
    <property type="nucleotide sequence ID" value="NM_198834.3"/>
</dbReference>
<dbReference type="RefSeq" id="NP_942133.1">
    <molecule id="Q13085-1"/>
    <property type="nucleotide sequence ID" value="NM_198836.3"/>
</dbReference>
<dbReference type="RefSeq" id="NP_942134.1">
    <molecule id="Q13085-2"/>
    <property type="nucleotide sequence ID" value="NM_198837.2"/>
</dbReference>
<dbReference type="RefSeq" id="NP_942135.1">
    <molecule id="Q13085-3"/>
    <property type="nucleotide sequence ID" value="NM_198838.2"/>
</dbReference>
<dbReference type="RefSeq" id="NP_942136.1">
    <molecule id="Q13085-1"/>
    <property type="nucleotide sequence ID" value="NM_198839.3"/>
</dbReference>
<dbReference type="RefSeq" id="XP_005257324.1">
    <molecule id="Q13085-3"/>
    <property type="nucleotide sequence ID" value="XM_005257267.6"/>
</dbReference>
<dbReference type="RefSeq" id="XP_011523005.1">
    <molecule id="Q13085-1"/>
    <property type="nucleotide sequence ID" value="XM_011524703.1"/>
</dbReference>
<dbReference type="RefSeq" id="XP_011523006.1">
    <molecule id="Q13085-3"/>
    <property type="nucleotide sequence ID" value="XM_011524704.3"/>
</dbReference>
<dbReference type="RefSeq" id="XP_016880044.1">
    <property type="nucleotide sequence ID" value="XM_017024555.1"/>
</dbReference>
<dbReference type="RefSeq" id="XP_047291834.1">
    <molecule id="Q13085-1"/>
    <property type="nucleotide sequence ID" value="XM_047435878.1"/>
</dbReference>
<dbReference type="RefSeq" id="XP_047291835.1">
    <molecule id="Q13085-1"/>
    <property type="nucleotide sequence ID" value="XM_047435879.1"/>
</dbReference>
<dbReference type="RefSeq" id="XP_047291836.1">
    <molecule id="Q13085-1"/>
    <property type="nucleotide sequence ID" value="XM_047435880.1"/>
</dbReference>
<dbReference type="RefSeq" id="XP_047291837.1">
    <molecule id="Q13085-1"/>
    <property type="nucleotide sequence ID" value="XM_047435881.1"/>
</dbReference>
<dbReference type="RefSeq" id="XP_047291838.1">
    <molecule id="Q13085-1"/>
    <property type="nucleotide sequence ID" value="XM_047435882.1"/>
</dbReference>
<dbReference type="RefSeq" id="XP_047291839.1">
    <molecule id="Q13085-1"/>
    <property type="nucleotide sequence ID" value="XM_047435883.1"/>
</dbReference>
<dbReference type="RefSeq" id="XP_047291842.1">
    <molecule id="Q13085-2"/>
    <property type="nucleotide sequence ID" value="XM_047435886.1"/>
</dbReference>
<dbReference type="RefSeq" id="XP_047291846.1">
    <molecule id="Q13085-3"/>
    <property type="nucleotide sequence ID" value="XM_047435890.1"/>
</dbReference>
<dbReference type="RefSeq" id="XP_054171874.1">
    <molecule id="Q13085-1"/>
    <property type="nucleotide sequence ID" value="XM_054315899.1"/>
</dbReference>
<dbReference type="RefSeq" id="XP_054171879.1">
    <molecule id="Q13085-3"/>
    <property type="nucleotide sequence ID" value="XM_054315904.1"/>
</dbReference>
<dbReference type="RefSeq" id="XP_054171880.1">
    <molecule id="Q13085-3"/>
    <property type="nucleotide sequence ID" value="XM_054315905.1"/>
</dbReference>
<dbReference type="RefSeq" id="XP_054171881.1">
    <molecule id="Q13085-3"/>
    <property type="nucleotide sequence ID" value="XM_054315906.1"/>
</dbReference>
<dbReference type="RefSeq" id="XP_054171882.1">
    <molecule id="Q13085-3"/>
    <property type="nucleotide sequence ID" value="XM_054315907.1"/>
</dbReference>
<dbReference type="RefSeq" id="XP_054171886.1">
    <molecule id="Q13085-1"/>
    <property type="nucleotide sequence ID" value="XM_054315911.1"/>
</dbReference>
<dbReference type="RefSeq" id="XP_054185262.1">
    <molecule id="Q13085-1"/>
    <property type="nucleotide sequence ID" value="XM_054329287.1"/>
</dbReference>
<dbReference type="RefSeq" id="XP_054185267.1">
    <molecule id="Q13085-3"/>
    <property type="nucleotide sequence ID" value="XM_054329292.1"/>
</dbReference>
<dbReference type="RefSeq" id="XP_054185268.1">
    <molecule id="Q13085-3"/>
    <property type="nucleotide sequence ID" value="XM_054329293.1"/>
</dbReference>
<dbReference type="RefSeq" id="XP_054185269.1">
    <molecule id="Q13085-3"/>
    <property type="nucleotide sequence ID" value="XM_054329294.1"/>
</dbReference>
<dbReference type="RefSeq" id="XP_054185271.1">
    <molecule id="Q13085-1"/>
    <property type="nucleotide sequence ID" value="XM_054329296.1"/>
</dbReference>
<dbReference type="PDB" id="2YL2">
    <property type="method" value="X-ray"/>
    <property type="resolution" value="2.30 A"/>
    <property type="chains" value="A/B=78-617"/>
</dbReference>
<dbReference type="PDB" id="3COJ">
    <property type="method" value="X-ray"/>
    <property type="resolution" value="3.21 A"/>
    <property type="chains" value="H/I/J/K/L/M/N/O=1258-1270"/>
</dbReference>
<dbReference type="PDB" id="4ASI">
    <property type="method" value="X-ray"/>
    <property type="resolution" value="2.80 A"/>
    <property type="chains" value="A/B/C/D/E/F=1571-2338"/>
</dbReference>
<dbReference type="PDB" id="6G2D">
    <property type="method" value="EM"/>
    <property type="resolution" value="5.40 A"/>
    <property type="chains" value="B/C/D/F=1-2346"/>
</dbReference>
<dbReference type="PDB" id="6G2H">
    <property type="method" value="EM"/>
    <property type="resolution" value="4.60 A"/>
    <property type="chains" value="A/B/C/D/E/F=1-2346"/>
</dbReference>
<dbReference type="PDB" id="6G2I">
    <property type="method" value="EM"/>
    <property type="resolution" value="5.90 A"/>
    <property type="chains" value="A/B/C/D/E/F/G/J/Q/R=1-2346"/>
</dbReference>
<dbReference type="PDB" id="8XKZ">
    <property type="method" value="EM"/>
    <property type="resolution" value="2.55 A"/>
    <property type="chains" value="C/D=98-2337"/>
</dbReference>
<dbReference type="PDB" id="8XL0">
    <property type="method" value="EM"/>
    <property type="resolution" value="4.14 A"/>
    <property type="chains" value="A/B/C/D/E/F=1-2346"/>
</dbReference>
<dbReference type="PDB" id="8XL1">
    <property type="method" value="EM"/>
    <property type="resolution" value="2.57 A"/>
    <property type="chains" value="A/B=1-2346"/>
</dbReference>
<dbReference type="PDB" id="8XL2">
    <property type="method" value="EM"/>
    <property type="resolution" value="2.73 A"/>
    <property type="chains" value="A/B/C/D=1-2346"/>
</dbReference>
<dbReference type="PDBsum" id="2YL2"/>
<dbReference type="PDBsum" id="3COJ"/>
<dbReference type="PDBsum" id="4ASI"/>
<dbReference type="PDBsum" id="6G2D"/>
<dbReference type="PDBsum" id="6G2H"/>
<dbReference type="PDBsum" id="6G2I"/>
<dbReference type="PDBsum" id="8XKZ"/>
<dbReference type="PDBsum" id="8XL0"/>
<dbReference type="PDBsum" id="8XL1"/>
<dbReference type="PDBsum" id="8XL2"/>
<dbReference type="EMDB" id="EMD-38432"/>
<dbReference type="EMDB" id="EMD-38433"/>
<dbReference type="EMDB" id="EMD-38434"/>
<dbReference type="EMDB" id="EMD-38435"/>
<dbReference type="EMDB" id="EMD-4342"/>
<dbReference type="EMDB" id="EMD-4343"/>
<dbReference type="EMDB" id="EMD-4344"/>
<dbReference type="SMR" id="Q13085"/>
<dbReference type="BioGRID" id="106549">
    <property type="interactions" value="482"/>
</dbReference>
<dbReference type="DIP" id="DIP-36122N"/>
<dbReference type="ELM" id="Q13085"/>
<dbReference type="FunCoup" id="Q13085">
    <property type="interactions" value="2699"/>
</dbReference>
<dbReference type="IntAct" id="Q13085">
    <property type="interactions" value="79"/>
</dbReference>
<dbReference type="MINT" id="Q13085"/>
<dbReference type="STRING" id="9606.ENSP00000483300"/>
<dbReference type="BindingDB" id="Q13085"/>
<dbReference type="ChEMBL" id="CHEMBL3351"/>
<dbReference type="DrugBank" id="DB00121">
    <property type="generic name" value="Biotin"/>
</dbReference>
<dbReference type="GuidetoPHARMACOLOGY" id="1263"/>
<dbReference type="SwissLipids" id="SLP:000000729"/>
<dbReference type="GlyGen" id="Q13085">
    <property type="glycosylation" value="1 site, 1 O-linked glycan (1 site)"/>
</dbReference>
<dbReference type="iPTMnet" id="Q13085"/>
<dbReference type="PhosphoSitePlus" id="Q13085"/>
<dbReference type="SwissPalm" id="Q13085"/>
<dbReference type="BioMuta" id="ACACA"/>
<dbReference type="DMDM" id="118601083"/>
<dbReference type="CPTAC" id="CPTAC-782"/>
<dbReference type="jPOST" id="Q13085"/>
<dbReference type="MassIVE" id="Q13085"/>
<dbReference type="PaxDb" id="9606-ENSP00000483300"/>
<dbReference type="PeptideAtlas" id="Q13085"/>
<dbReference type="ProteomicsDB" id="59139">
    <molecule id="Q13085-1"/>
</dbReference>
<dbReference type="ProteomicsDB" id="59140">
    <molecule id="Q13085-2"/>
</dbReference>
<dbReference type="ProteomicsDB" id="59141">
    <molecule id="Q13085-3"/>
</dbReference>
<dbReference type="ProteomicsDB" id="59142">
    <molecule id="Q13085-4"/>
</dbReference>
<dbReference type="Pumba" id="Q13085"/>
<dbReference type="ABCD" id="Q13085">
    <property type="antibodies" value="1 sequenced antibody"/>
</dbReference>
<dbReference type="Antibodypedia" id="73364">
    <property type="antibodies" value="678 antibodies from 39 providers"/>
</dbReference>
<dbReference type="DNASU" id="31"/>
<dbReference type="Ensembl" id="ENST00000611803.2">
    <molecule id="Q13085-2"/>
    <property type="protein sequence ID" value="ENSP00000479901.1"/>
    <property type="gene ID" value="ENSG00000275176.4"/>
</dbReference>
<dbReference type="Ensembl" id="ENST00000612895.4">
    <molecule id="Q13085-2"/>
    <property type="protein sequence ID" value="ENSP00000482269.1"/>
    <property type="gene ID" value="ENSG00000278540.5"/>
</dbReference>
<dbReference type="Ensembl" id="ENST00000613687.4">
    <molecule id="Q13085-1"/>
    <property type="protein sequence ID" value="ENSP00000483674.1"/>
    <property type="gene ID" value="ENSG00000275176.4"/>
</dbReference>
<dbReference type="Ensembl" id="ENST00000614428.4">
    <molecule id="Q13085-1"/>
    <property type="protein sequence ID" value="ENSP00000478547.1"/>
    <property type="gene ID" value="ENSG00000278540.5"/>
</dbReference>
<dbReference type="Ensembl" id="ENST00000616317.5">
    <molecule id="Q13085-4"/>
    <property type="protein sequence ID" value="ENSP00000483300.1"/>
    <property type="gene ID" value="ENSG00000278540.5"/>
</dbReference>
<dbReference type="Ensembl" id="ENST00000617649.4">
    <molecule id="Q13085-3"/>
    <property type="protein sequence ID" value="ENSP00000482368.1"/>
    <property type="gene ID" value="ENSG00000278540.5"/>
</dbReference>
<dbReference type="Ensembl" id="ENST00000619487.4">
    <molecule id="Q13085-4"/>
    <property type="protein sequence ID" value="ENSP00000478577.1"/>
    <property type="gene ID" value="ENSG00000275176.4"/>
</dbReference>
<dbReference type="Ensembl" id="ENST00000621312.4">
    <molecule id="Q13085-3"/>
    <property type="protein sequence ID" value="ENSP00000480031.1"/>
    <property type="gene ID" value="ENSG00000275176.4"/>
</dbReference>
<dbReference type="GeneID" id="31"/>
<dbReference type="KEGG" id="hsa:31"/>
<dbReference type="MANE-Select" id="ENST00000616317.5">
    <molecule id="Q13085-4"/>
    <property type="protein sequence ID" value="ENSP00000483300.1"/>
    <property type="RefSeq nucleotide sequence ID" value="NM_198834.3"/>
    <property type="RefSeq protein sequence ID" value="NP_942131.1"/>
</dbReference>
<dbReference type="UCSC" id="uc002hnk.4">
    <molecule id="Q13085-1"/>
    <property type="organism name" value="human"/>
</dbReference>
<dbReference type="AGR" id="HGNC:84"/>
<dbReference type="CTD" id="31"/>
<dbReference type="DisGeNET" id="31"/>
<dbReference type="GeneCards" id="ACACA"/>
<dbReference type="HGNC" id="HGNC:84">
    <property type="gene designation" value="ACACA"/>
</dbReference>
<dbReference type="HPA" id="ENSG00000278540">
    <property type="expression patterns" value="Low tissue specificity"/>
</dbReference>
<dbReference type="MalaCards" id="ACACA"/>
<dbReference type="MIM" id="200350">
    <property type="type" value="gene"/>
</dbReference>
<dbReference type="MIM" id="613933">
    <property type="type" value="phenotype"/>
</dbReference>
<dbReference type="neXtProt" id="NX_Q13085"/>
<dbReference type="OpenTargets" id="ENSG00000278540"/>
<dbReference type="PharmGKB" id="PA24421"/>
<dbReference type="VEuPathDB" id="HostDB:ENSG00000278540"/>
<dbReference type="eggNOG" id="KOG0368">
    <property type="taxonomic scope" value="Eukaryota"/>
</dbReference>
<dbReference type="GeneTree" id="ENSGT00940000156706"/>
<dbReference type="HOGENOM" id="CLU_000395_5_0_1"/>
<dbReference type="InParanoid" id="Q13085"/>
<dbReference type="OMA" id="PTPKGHC"/>
<dbReference type="OrthoDB" id="14612at2759"/>
<dbReference type="PAN-GO" id="Q13085">
    <property type="GO annotations" value="3 GO annotations based on evolutionary models"/>
</dbReference>
<dbReference type="PhylomeDB" id="Q13085"/>
<dbReference type="TreeFam" id="TF300061"/>
<dbReference type="BioCyc" id="MetaCyc:HS05598-MONOMER"/>
<dbReference type="BRENDA" id="6.4.1.2">
    <property type="organism ID" value="2681"/>
</dbReference>
<dbReference type="PathwayCommons" id="Q13085"/>
<dbReference type="Reactome" id="R-HSA-163765">
    <property type="pathway name" value="ChREBP activates metabolic gene expression"/>
</dbReference>
<dbReference type="Reactome" id="R-HSA-196780">
    <property type="pathway name" value="Biotin transport and metabolism"/>
</dbReference>
<dbReference type="Reactome" id="R-HSA-200425">
    <property type="pathway name" value="Carnitine shuttle"/>
</dbReference>
<dbReference type="Reactome" id="R-HSA-2426168">
    <property type="pathway name" value="Activation of gene expression by SREBF (SREBP)"/>
</dbReference>
<dbReference type="Reactome" id="R-HSA-3371599">
    <property type="pathway name" value="Defective HLCS causes multiple carboxylase deficiency"/>
</dbReference>
<dbReference type="Reactome" id="R-HSA-75105">
    <property type="pathway name" value="Fatty acyl-CoA biosynthesis"/>
</dbReference>
<dbReference type="SABIO-RK" id="Q13085"/>
<dbReference type="SignaLink" id="Q13085"/>
<dbReference type="SIGNOR" id="Q13085"/>
<dbReference type="UniPathway" id="UPA00655">
    <property type="reaction ID" value="UER00711"/>
</dbReference>
<dbReference type="BioGRID-ORCS" id="31">
    <property type="hits" value="225 hits in 1172 CRISPR screens"/>
</dbReference>
<dbReference type="ChiTaRS" id="ACACA">
    <property type="organism name" value="human"/>
</dbReference>
<dbReference type="EvolutionaryTrace" id="Q13085"/>
<dbReference type="GeneWiki" id="ACACA"/>
<dbReference type="GenomeRNAi" id="31"/>
<dbReference type="Pharos" id="Q13085">
    <property type="development level" value="Tchem"/>
</dbReference>
<dbReference type="PRO" id="PR:Q13085"/>
<dbReference type="Proteomes" id="UP000005640">
    <property type="component" value="Chromosome 17"/>
</dbReference>
<dbReference type="RNAct" id="Q13085">
    <property type="molecule type" value="protein"/>
</dbReference>
<dbReference type="Bgee" id="ENSG00000278540">
    <property type="expression patterns" value="Expressed in cortical plate and 104 other cell types or tissues"/>
</dbReference>
<dbReference type="ExpressionAtlas" id="Q13085">
    <property type="expression patterns" value="baseline and differential"/>
</dbReference>
<dbReference type="GO" id="GO:0015629">
    <property type="term" value="C:actin cytoskeleton"/>
    <property type="evidence" value="ECO:0000314"/>
    <property type="project" value="HPA"/>
</dbReference>
<dbReference type="GO" id="GO:0005829">
    <property type="term" value="C:cytosol"/>
    <property type="evidence" value="ECO:0000314"/>
    <property type="project" value="HPA"/>
</dbReference>
<dbReference type="GO" id="GO:0001650">
    <property type="term" value="C:fibrillar center"/>
    <property type="evidence" value="ECO:0000314"/>
    <property type="project" value="HPA"/>
</dbReference>
<dbReference type="GO" id="GO:0005739">
    <property type="term" value="C:mitochondrion"/>
    <property type="evidence" value="ECO:0000318"/>
    <property type="project" value="GO_Central"/>
</dbReference>
<dbReference type="GO" id="GO:0003989">
    <property type="term" value="F:acetyl-CoA carboxylase activity"/>
    <property type="evidence" value="ECO:0000314"/>
    <property type="project" value="UniProtKB"/>
</dbReference>
<dbReference type="GO" id="GO:0005524">
    <property type="term" value="F:ATP binding"/>
    <property type="evidence" value="ECO:0007669"/>
    <property type="project" value="UniProtKB-KW"/>
</dbReference>
<dbReference type="GO" id="GO:0042802">
    <property type="term" value="F:identical protein binding"/>
    <property type="evidence" value="ECO:0000353"/>
    <property type="project" value="IntAct"/>
</dbReference>
<dbReference type="GO" id="GO:0046872">
    <property type="term" value="F:metal ion binding"/>
    <property type="evidence" value="ECO:0007669"/>
    <property type="project" value="UniProtKB-KW"/>
</dbReference>
<dbReference type="GO" id="GO:0006084">
    <property type="term" value="P:acetyl-CoA metabolic process"/>
    <property type="evidence" value="ECO:0000250"/>
    <property type="project" value="UniProtKB"/>
</dbReference>
<dbReference type="GO" id="GO:0071380">
    <property type="term" value="P:cellular response to prostaglandin E stimulus"/>
    <property type="evidence" value="ECO:0007669"/>
    <property type="project" value="Ensembl"/>
</dbReference>
<dbReference type="GO" id="GO:0006633">
    <property type="term" value="P:fatty acid biosynthetic process"/>
    <property type="evidence" value="ECO:0000250"/>
    <property type="project" value="UniProtKB"/>
</dbReference>
<dbReference type="GO" id="GO:0046949">
    <property type="term" value="P:fatty-acyl-CoA biosynthetic process"/>
    <property type="evidence" value="ECO:0000304"/>
    <property type="project" value="Reactome"/>
</dbReference>
<dbReference type="GO" id="GO:0055088">
    <property type="term" value="P:lipid homeostasis"/>
    <property type="evidence" value="ECO:0007669"/>
    <property type="project" value="Ensembl"/>
</dbReference>
<dbReference type="GO" id="GO:2001295">
    <property type="term" value="P:malonyl-CoA biosynthetic process"/>
    <property type="evidence" value="ECO:0007669"/>
    <property type="project" value="UniProtKB-UniPathway"/>
</dbReference>
<dbReference type="GO" id="GO:0051289">
    <property type="term" value="P:protein homotetramerization"/>
    <property type="evidence" value="ECO:0000250"/>
    <property type="project" value="UniProtKB"/>
</dbReference>
<dbReference type="GO" id="GO:0001894">
    <property type="term" value="P:tissue homeostasis"/>
    <property type="evidence" value="ECO:0007669"/>
    <property type="project" value="Ensembl"/>
</dbReference>
<dbReference type="CDD" id="cd06850">
    <property type="entry name" value="biotinyl_domain"/>
    <property type="match status" value="1"/>
</dbReference>
<dbReference type="FunFam" id="2.40.460.10:FF:000001">
    <property type="entry name" value="Acetyl-CoA carboxylase 1"/>
    <property type="match status" value="1"/>
</dbReference>
<dbReference type="FunFam" id="2.40.50.100:FF:000005">
    <property type="entry name" value="Acetyl-CoA carboxylase 1"/>
    <property type="match status" value="1"/>
</dbReference>
<dbReference type="FunFam" id="3.30.470.20:FF:000005">
    <property type="entry name" value="Acetyl-CoA carboxylase 1"/>
    <property type="match status" value="1"/>
</dbReference>
<dbReference type="FunFam" id="3.90.1770.10:FF:000001">
    <property type="entry name" value="acetyl-CoA carboxylase 1"/>
    <property type="match status" value="1"/>
</dbReference>
<dbReference type="FunFam" id="3.30.1490.20:FF:000003">
    <property type="entry name" value="acetyl-CoA carboxylase isoform X1"/>
    <property type="match status" value="1"/>
</dbReference>
<dbReference type="FunFam" id="3.40.50.20:FF:000005">
    <property type="entry name" value="acetyl-CoA carboxylase isoform X2"/>
    <property type="match status" value="1"/>
</dbReference>
<dbReference type="FunFam" id="3.90.226.10:FF:000010">
    <property type="entry name" value="acetyl-CoA carboxylase isoform X2"/>
    <property type="match status" value="1"/>
</dbReference>
<dbReference type="Gene3D" id="2.40.50.100">
    <property type="match status" value="1"/>
</dbReference>
<dbReference type="Gene3D" id="3.40.50.20">
    <property type="match status" value="1"/>
</dbReference>
<dbReference type="Gene3D" id="3.90.226.10">
    <property type="entry name" value="2-enoyl-CoA Hydratase, Chain A, domain 1"/>
    <property type="match status" value="2"/>
</dbReference>
<dbReference type="Gene3D" id="3.30.1490.20">
    <property type="entry name" value="ATP-grasp fold, A domain"/>
    <property type="match status" value="1"/>
</dbReference>
<dbReference type="Gene3D" id="3.30.470.20">
    <property type="entry name" value="ATP-grasp fold, B domain"/>
    <property type="match status" value="1"/>
</dbReference>
<dbReference type="Gene3D" id="2.40.460.10">
    <property type="entry name" value="Biotin dependent carboxylase carboxyltransferase"/>
    <property type="match status" value="1"/>
</dbReference>
<dbReference type="Gene3D" id="3.90.1770.10">
    <property type="entry name" value="PreATP-grasp domain"/>
    <property type="match status" value="1"/>
</dbReference>
<dbReference type="IDEAL" id="IID00610"/>
<dbReference type="InterPro" id="IPR049076">
    <property type="entry name" value="ACCA"/>
</dbReference>
<dbReference type="InterPro" id="IPR049074">
    <property type="entry name" value="ACCA_BT"/>
</dbReference>
<dbReference type="InterPro" id="IPR034733">
    <property type="entry name" value="AcCoA_carboxyl_beta"/>
</dbReference>
<dbReference type="InterPro" id="IPR013537">
    <property type="entry name" value="AcCoA_COase_cen"/>
</dbReference>
<dbReference type="InterPro" id="IPR011761">
    <property type="entry name" value="ATP-grasp"/>
</dbReference>
<dbReference type="InterPro" id="IPR013815">
    <property type="entry name" value="ATP_grasp_subdomain_1"/>
</dbReference>
<dbReference type="InterPro" id="IPR005481">
    <property type="entry name" value="BC-like_N"/>
</dbReference>
<dbReference type="InterPro" id="IPR001882">
    <property type="entry name" value="Biotin_BS"/>
</dbReference>
<dbReference type="InterPro" id="IPR011764">
    <property type="entry name" value="Biotin_carboxylation_dom"/>
</dbReference>
<dbReference type="InterPro" id="IPR005482">
    <property type="entry name" value="Biotin_COase_C"/>
</dbReference>
<dbReference type="InterPro" id="IPR000089">
    <property type="entry name" value="Biotin_lipoyl"/>
</dbReference>
<dbReference type="InterPro" id="IPR005479">
    <property type="entry name" value="CbamoylP_synth_lsu-like_ATP-bd"/>
</dbReference>
<dbReference type="InterPro" id="IPR029045">
    <property type="entry name" value="ClpP/crotonase-like_dom_sf"/>
</dbReference>
<dbReference type="InterPro" id="IPR011763">
    <property type="entry name" value="COA_CT_C"/>
</dbReference>
<dbReference type="InterPro" id="IPR011762">
    <property type="entry name" value="COA_CT_N"/>
</dbReference>
<dbReference type="InterPro" id="IPR016185">
    <property type="entry name" value="PreATP-grasp_dom_sf"/>
</dbReference>
<dbReference type="InterPro" id="IPR011054">
    <property type="entry name" value="Rudment_hybrid_motif"/>
</dbReference>
<dbReference type="InterPro" id="IPR011053">
    <property type="entry name" value="Single_hybrid_motif"/>
</dbReference>
<dbReference type="PANTHER" id="PTHR45728:SF5">
    <property type="entry name" value="ACETYL-COA CARBOXYLASE 1"/>
    <property type="match status" value="1"/>
</dbReference>
<dbReference type="PANTHER" id="PTHR45728">
    <property type="entry name" value="ACETYL-COA CARBOXYLASE, ISOFORM A"/>
    <property type="match status" value="1"/>
</dbReference>
<dbReference type="Pfam" id="PF08326">
    <property type="entry name" value="ACC_central"/>
    <property type="match status" value="1"/>
</dbReference>
<dbReference type="Pfam" id="PF21385">
    <property type="entry name" value="ACCA_BT"/>
    <property type="match status" value="1"/>
</dbReference>
<dbReference type="Pfam" id="PF02785">
    <property type="entry name" value="Biotin_carb_C"/>
    <property type="match status" value="1"/>
</dbReference>
<dbReference type="Pfam" id="PF00289">
    <property type="entry name" value="Biotin_carb_N"/>
    <property type="match status" value="1"/>
</dbReference>
<dbReference type="Pfam" id="PF00364">
    <property type="entry name" value="Biotin_lipoyl"/>
    <property type="match status" value="1"/>
</dbReference>
<dbReference type="Pfam" id="PF01039">
    <property type="entry name" value="Carboxyl_trans"/>
    <property type="match status" value="1"/>
</dbReference>
<dbReference type="Pfam" id="PF02786">
    <property type="entry name" value="CPSase_L_D2"/>
    <property type="match status" value="1"/>
</dbReference>
<dbReference type="SMART" id="SM00878">
    <property type="entry name" value="Biotin_carb_C"/>
    <property type="match status" value="1"/>
</dbReference>
<dbReference type="SUPFAM" id="SSF52096">
    <property type="entry name" value="ClpP/crotonase"/>
    <property type="match status" value="2"/>
</dbReference>
<dbReference type="SUPFAM" id="SSF56059">
    <property type="entry name" value="Glutathione synthetase ATP-binding domain-like"/>
    <property type="match status" value="1"/>
</dbReference>
<dbReference type="SUPFAM" id="SSF52440">
    <property type="entry name" value="PreATP-grasp domain"/>
    <property type="match status" value="1"/>
</dbReference>
<dbReference type="SUPFAM" id="SSF51246">
    <property type="entry name" value="Rudiment single hybrid motif"/>
    <property type="match status" value="1"/>
</dbReference>
<dbReference type="SUPFAM" id="SSF51230">
    <property type="entry name" value="Single hybrid motif"/>
    <property type="match status" value="1"/>
</dbReference>
<dbReference type="PROSITE" id="PS50975">
    <property type="entry name" value="ATP_GRASP"/>
    <property type="match status" value="1"/>
</dbReference>
<dbReference type="PROSITE" id="PS50979">
    <property type="entry name" value="BC"/>
    <property type="match status" value="1"/>
</dbReference>
<dbReference type="PROSITE" id="PS00188">
    <property type="entry name" value="BIOTIN"/>
    <property type="match status" value="1"/>
</dbReference>
<dbReference type="PROSITE" id="PS50968">
    <property type="entry name" value="BIOTINYL_LIPOYL"/>
    <property type="match status" value="1"/>
</dbReference>
<dbReference type="PROSITE" id="PS50989">
    <property type="entry name" value="COA_CT_CTER"/>
    <property type="match status" value="1"/>
</dbReference>
<dbReference type="PROSITE" id="PS50980">
    <property type="entry name" value="COA_CT_NTER"/>
    <property type="match status" value="1"/>
</dbReference>
<dbReference type="PROSITE" id="PS00866">
    <property type="entry name" value="CPSASE_1"/>
    <property type="match status" value="1"/>
</dbReference>
<dbReference type="PROSITE" id="PS00867">
    <property type="entry name" value="CPSASE_2"/>
    <property type="match status" value="1"/>
</dbReference>
<comment type="function">
    <text evidence="16 17 18">Cytosolic enzyme that catalyzes the carboxylation of acetyl-CoA to malonyl-CoA, the first and rate-limiting step of de novo fatty acid biosynthesis (PubMed:20457939, PubMed:20952656, PubMed:29899443). This is a 2 steps reaction starting with the ATP-dependent carboxylation of the biotin carried by the biotin carboxyl carrier (BCC) domain followed by the transfer of the carboxyl group from carboxylated biotin to acetyl-CoA (PubMed:20457939, PubMed:20952656, PubMed:29899443).</text>
</comment>
<comment type="catalytic activity">
    <reaction evidence="16 17 18">
        <text>hydrogencarbonate + acetyl-CoA + ATP = malonyl-CoA + ADP + phosphate + H(+)</text>
        <dbReference type="Rhea" id="RHEA:11308"/>
        <dbReference type="ChEBI" id="CHEBI:15378"/>
        <dbReference type="ChEBI" id="CHEBI:17544"/>
        <dbReference type="ChEBI" id="CHEBI:30616"/>
        <dbReference type="ChEBI" id="CHEBI:43474"/>
        <dbReference type="ChEBI" id="CHEBI:57288"/>
        <dbReference type="ChEBI" id="CHEBI:57384"/>
        <dbReference type="ChEBI" id="CHEBI:456216"/>
        <dbReference type="EC" id="6.4.1.2"/>
    </reaction>
    <physiologicalReaction direction="left-to-right" evidence="25">
        <dbReference type="Rhea" id="RHEA:11309"/>
    </physiologicalReaction>
</comment>
<comment type="cofactor">
    <cofactor evidence="4 5">
        <name>Mg(2+)</name>
        <dbReference type="ChEBI" id="CHEBI:18420"/>
    </cofactor>
    <cofactor evidence="4 5">
        <name>Mn(2+)</name>
        <dbReference type="ChEBI" id="CHEBI:29035"/>
    </cofactor>
    <text evidence="4 5">Binds 2 magnesium or manganese ions per subunit.</text>
</comment>
<comment type="cofactor">
    <cofactor evidence="6 18">
        <name>biotin</name>
        <dbReference type="ChEBI" id="CHEBI:57586"/>
    </cofactor>
</comment>
<comment type="activity regulation">
    <text evidence="12 18">Inhibited by phosphorylation (PubMed:16326698, PubMed:29899443). Citrate promotes oligomerization of the protein into filaments that correspond to the most active form of the carboxylase (PubMed:29899443). Inhibited by palmitoyl-CoA (PubMed:29899443).</text>
</comment>
<comment type="pathway">
    <text evidence="25 26">Lipid metabolism; malonyl-CoA biosynthesis; malonyl-CoA from acetyl-CoA: step 1/1.</text>
</comment>
<comment type="subunit">
    <text evidence="10 12 15 16 17 18">Monomer, homodimer, and homotetramer (PubMed:20952656, PubMed:29899443). Can form filamentous polymers (PubMed:20457939, PubMed:20952656, PubMed:29899443). Interacts in its inactive phosphorylated form with the BRCT domains of BRCA1 which prevents ACACA dephosphorylation and inhibits lipid synthesis (PubMed:12360400, PubMed:16326698, PubMed:18452305, PubMed:29899443). Interacts with MID1IP1; interaction with MID1IP1 promotes oligomerization and increases its activity (PubMed:20457939).</text>
</comment>
<comment type="interaction">
    <interactant intactId="EBI-717681">
        <id>Q13085</id>
    </interactant>
    <interactant intactId="EBI-717681">
        <id>Q13085</id>
        <label>ACACA</label>
    </interactant>
    <organismsDiffer>false</organismsDiffer>
    <experiments>2</experiments>
</comment>
<comment type="interaction">
    <interactant intactId="EBI-717681">
        <id>Q13085</id>
    </interactant>
    <interactant intactId="EBI-1572139">
        <id>O60218</id>
        <label>AKR1B10</label>
    </interactant>
    <organismsDiffer>false</organismsDiffer>
    <experiments>4</experiments>
</comment>
<comment type="interaction">
    <interactant intactId="EBI-717681">
        <id>Q13085</id>
    </interactant>
    <interactant intactId="EBI-349905">
        <id>P38398</id>
        <label>BRCA1</label>
    </interactant>
    <organismsDiffer>false</organismsDiffer>
    <experiments>2</experiments>
</comment>
<comment type="interaction">
    <interactant intactId="EBI-717681">
        <id>Q13085</id>
    </interactant>
    <interactant intactId="EBI-714158">
        <id>Q13526</id>
        <label>PIN1</label>
    </interactant>
    <organismsDiffer>false</organismsDiffer>
    <experiments>9</experiments>
</comment>
<comment type="interaction">
    <interactant intactId="EBI-717681">
        <id>Q13085</id>
    </interactant>
    <interactant intactId="EBI-1802965">
        <id>Q96EB6</id>
        <label>SIRT1</label>
    </interactant>
    <organismsDiffer>false</organismsDiffer>
    <experiments>3</experiments>
</comment>
<comment type="interaction">
    <interactant intactId="EBI-717681">
        <id>Q13085</id>
    </interactant>
    <interactant intactId="EBI-473024">
        <id>Q9CQ20</id>
        <label>Mid1ip1</label>
    </interactant>
    <organismsDiffer>true</organismsDiffer>
    <experiments>4</experiments>
</comment>
<comment type="interaction">
    <interactant intactId="EBI-12562760">
        <id>Q13085-4</id>
    </interactant>
    <interactant intactId="EBI-1220105">
        <id>P02654</id>
        <label>APOC1</label>
    </interactant>
    <organismsDiffer>false</organismsDiffer>
    <experiments>3</experiments>
</comment>
<comment type="interaction">
    <interactant intactId="EBI-12562760">
        <id>Q13085-4</id>
    </interactant>
    <interactant intactId="EBI-12836320">
        <id>Q92915-2</id>
        <label>FGF14</label>
    </interactant>
    <organismsDiffer>false</organismsDiffer>
    <experiments>3</experiments>
</comment>
<comment type="interaction">
    <interactant intactId="EBI-12562760">
        <id>Q13085-4</id>
    </interactant>
    <interactant intactId="EBI-17589229">
        <id>Q6NTF9-3</id>
        <label>RHBDD2</label>
    </interactant>
    <organismsDiffer>false</organismsDiffer>
    <experiments>3</experiments>
</comment>
<comment type="subcellular location">
    <subcellularLocation>
        <location evidence="3">Cytoplasm</location>
        <location evidence="3">Cytosol</location>
    </subcellularLocation>
</comment>
<comment type="alternative products">
    <event type="alternative promoter"/>
    <isoform>
        <id>Q13085-1</id>
        <name>1</name>
        <sequence type="displayed"/>
    </isoform>
    <isoform>
        <id>Q13085-2</id>
        <name>2</name>
        <name>E5A</name>
        <sequence type="described" ref="VSP_026099"/>
    </isoform>
    <isoform>
        <id>Q13085-3</id>
        <name>3</name>
        <name>E5B</name>
        <sequence type="described" ref="VSP_026098"/>
    </isoform>
    <isoform>
        <id>Q13085-4</id>
        <name>4</name>
        <sequence type="described" ref="VSP_026100"/>
    </isoform>
</comment>
<comment type="tissue specificity">
    <text>Expressed in brain, placenta, skeletal muscle, renal, pancreatic and adipose tissues; expressed at low level in pulmonary tissue; not detected in the liver.</text>
</comment>
<comment type="domain">
    <text evidence="27">Consists of an N-terminal biotin carboxylation/carboxylase (BC) domain that catalyzes the ATP-dependent transient carboxylation of the biotin covalently attached to the central biotinyl-binding/biotin carboxyl carrier (BCC) domain (Probable). The C-terminal carboxyl transferase (CT) domain catalyzes the transfer of the carboxyl group from carboxylated biotin to acetyl-CoA to produce malonyl-CoA (Probable).</text>
</comment>
<comment type="PTM">
    <text evidence="13 20">Phosphorylation on Ser-1263 is required for interaction with BRCA1.</text>
</comment>
<comment type="PTM">
    <text evidence="2">Phosphorylation at Ser-80 by AMPK inactivates enzyme activity.</text>
</comment>
<comment type="PTM">
    <text evidence="18">The biotin cofactor is covalently attached to the central biotinyl-binding domain and is required for the catalytic activity.</text>
</comment>
<comment type="disease" evidence="19">
    <disease id="DI-01164">
        <name>Acetyl-CoA carboxylase-alpha deficiency</name>
        <acronym>ACACAD</acronym>
        <description>An autosomal recessive inborn error of de novo fatty acid synthesis associated with severe brain damage, persistent myopathy and poor growth.</description>
        <dbReference type="MIM" id="613933"/>
    </disease>
    <text>The disease is caused by variants affecting the gene represented in this entry.</text>
</comment>
<comment type="online information" name="Wikipedia">
    <link uri="https://en.wikipedia.org/wiki/Acetyl-CoA_carboxylase"/>
    <text>Acetyl-CoA carboxylase entry</text>
</comment>
<feature type="chain" id="PRO_0000146764" description="Acetyl-CoA carboxylase 1">
    <location>
        <begin position="1"/>
        <end position="2346"/>
    </location>
</feature>
<feature type="domain" description="Biotin carboxylation" evidence="5">
    <location>
        <begin position="117"/>
        <end position="618"/>
    </location>
</feature>
<feature type="domain" description="ATP-grasp" evidence="4">
    <location>
        <begin position="275"/>
        <end position="466"/>
    </location>
</feature>
<feature type="domain" description="Biotinyl-binding" evidence="6">
    <location>
        <begin position="745"/>
        <end position="819"/>
    </location>
</feature>
<feature type="domain" description="CoA carboxyltransferase N-terminal" evidence="7">
    <location>
        <begin position="1576"/>
        <end position="1914"/>
    </location>
</feature>
<feature type="domain" description="CoA carboxyltransferase C-terminal" evidence="8">
    <location>
        <begin position="1918"/>
        <end position="2234"/>
    </location>
</feature>
<feature type="region of interest" description="Carboxyltransferase" evidence="9">
    <location>
        <begin position="1576"/>
        <end position="2234"/>
    </location>
</feature>
<feature type="active site" evidence="1">
    <location>
        <position position="441"/>
    </location>
</feature>
<feature type="binding site" evidence="4">
    <location>
        <begin position="315"/>
        <end position="320"/>
    </location>
    <ligand>
        <name>ATP</name>
        <dbReference type="ChEBI" id="CHEBI:30616"/>
    </ligand>
</feature>
<feature type="binding site" evidence="4 5">
    <location>
        <position position="424"/>
    </location>
    <ligand>
        <name>Mg(2+)</name>
        <dbReference type="ChEBI" id="CHEBI:18420"/>
        <label>1</label>
    </ligand>
</feature>
<feature type="binding site" evidence="4 5">
    <location>
        <position position="424"/>
    </location>
    <ligand>
        <name>Mn(2+)</name>
        <dbReference type="ChEBI" id="CHEBI:29035"/>
        <label>1</label>
    </ligand>
</feature>
<feature type="binding site" evidence="4 5">
    <location>
        <position position="437"/>
    </location>
    <ligand>
        <name>Mg(2+)</name>
        <dbReference type="ChEBI" id="CHEBI:18420"/>
        <label>1</label>
    </ligand>
</feature>
<feature type="binding site" evidence="4 5">
    <location>
        <position position="437"/>
    </location>
    <ligand>
        <name>Mg(2+)</name>
        <dbReference type="ChEBI" id="CHEBI:18420"/>
        <label>2</label>
    </ligand>
</feature>
<feature type="binding site" evidence="4 5">
    <location>
        <position position="437"/>
    </location>
    <ligand>
        <name>Mn(2+)</name>
        <dbReference type="ChEBI" id="CHEBI:29035"/>
        <label>1</label>
    </ligand>
</feature>
<feature type="binding site" evidence="4 5">
    <location>
        <position position="437"/>
    </location>
    <ligand>
        <name>Mn(2+)</name>
        <dbReference type="ChEBI" id="CHEBI:29035"/>
        <label>2</label>
    </ligand>
</feature>
<feature type="binding site" evidence="4 5">
    <location>
        <position position="439"/>
    </location>
    <ligand>
        <name>Mg(2+)</name>
        <dbReference type="ChEBI" id="CHEBI:18420"/>
        <label>2</label>
    </ligand>
</feature>
<feature type="binding site" evidence="4 5">
    <location>
        <position position="439"/>
    </location>
    <ligand>
        <name>Mn(2+)</name>
        <dbReference type="ChEBI" id="CHEBI:29035"/>
        <label>2</label>
    </ligand>
</feature>
<feature type="binding site" evidence="1">
    <location>
        <position position="1823"/>
    </location>
    <ligand>
        <name>CoA</name>
        <dbReference type="ChEBI" id="CHEBI:57287"/>
    </ligand>
</feature>
<feature type="binding site" evidence="1">
    <location>
        <position position="2127"/>
    </location>
    <ligand>
        <name>CoA</name>
        <dbReference type="ChEBI" id="CHEBI:57287"/>
    </ligand>
</feature>
<feature type="binding site" evidence="1">
    <location>
        <position position="2129"/>
    </location>
    <ligand>
        <name>CoA</name>
        <dbReference type="ChEBI" id="CHEBI:57287"/>
    </ligand>
</feature>
<feature type="modified residue" description="N-acetylmethionine" evidence="20 33 36">
    <location>
        <position position="1"/>
    </location>
</feature>
<feature type="modified residue" description="Phosphoserine" evidence="33 36 38">
    <location>
        <position position="5"/>
    </location>
</feature>
<feature type="modified residue" description="Phosphoserine" evidence="31 35 36">
    <location>
        <position position="23"/>
    </location>
</feature>
<feature type="modified residue" description="Phosphoserine" evidence="31 35 38 39">
    <location>
        <position position="25"/>
    </location>
</feature>
<feature type="modified residue" description="Phosphoserine" evidence="29 31 32 33 35 36 37 38 39">
    <location>
        <position position="29"/>
    </location>
</feature>
<feature type="modified residue" description="Phosphoserine" evidence="2">
    <location>
        <position position="34"/>
    </location>
</feature>
<feature type="modified residue" description="Phosphoserine" evidence="36">
    <location>
        <position position="48"/>
    </location>
</feature>
<feature type="modified residue" description="Phosphoserine" evidence="2">
    <location>
        <position position="50"/>
    </location>
</feature>
<feature type="modified residue" description="Phosphoserine" evidence="29">
    <location>
        <position position="53"/>
    </location>
</feature>
<feature type="modified residue" description="Phosphothreonine" evidence="3">
    <location>
        <position position="58"/>
    </location>
</feature>
<feature type="modified residue" description="Phosphoserine" evidence="2">
    <location>
        <position position="78"/>
    </location>
</feature>
<feature type="modified residue" description="Phosphoserine" evidence="18 20 31 36 37 38">
    <location>
        <position position="80"/>
    </location>
</feature>
<feature type="modified residue" description="Phosphoserine" evidence="30">
    <location>
        <position position="488"/>
    </location>
</feature>
<feature type="modified residue" description="Phosphothreonine" evidence="38">
    <location>
        <position position="610"/>
    </location>
</feature>
<feature type="modified residue" description="N6-biotinyllysine" evidence="2 6">
    <location>
        <position position="786"/>
    </location>
</feature>
<feature type="modified residue" description="Phosphoserine" evidence="38">
    <location>
        <position position="835"/>
    </location>
</feature>
<feature type="modified residue" description="Phosphoserine" evidence="2">
    <location>
        <position position="1201"/>
    </location>
</feature>
<feature type="modified residue" description="Phosphoserine" evidence="2">
    <location>
        <position position="1216"/>
    </location>
</feature>
<feature type="modified residue" description="Phosphoserine" evidence="3">
    <location>
        <position position="1218"/>
    </location>
</feature>
<feature type="modified residue" description="Phosphothreonine" evidence="3">
    <location>
        <position position="1227"/>
    </location>
</feature>
<feature type="modified residue" description="Phosphoserine" evidence="3">
    <location>
        <position position="1259"/>
    </location>
</feature>
<feature type="modified residue" description="Phosphoserine" evidence="13 18">
    <location>
        <position position="1263"/>
    </location>
</feature>
<feature type="modified residue" description="Phosphoserine" evidence="39">
    <location>
        <position position="1273"/>
    </location>
</feature>
<feature type="modified residue" description="N6-acetyllysine" evidence="34">
    <location>
        <position position="1334"/>
    </location>
</feature>
<feature type="modified residue" description="Phosphothreonine" evidence="38">
    <location>
        <position position="2153"/>
    </location>
</feature>
<feature type="splice variant" id="VSP_026098" description="In isoform 3." evidence="21 22">
    <location>
        <begin position="1"/>
        <end position="78"/>
    </location>
</feature>
<feature type="splice variant" id="VSP_026099" description="In isoform 2." evidence="21 22">
    <original>MDEPSPLAQPLELNQHSRFIIGSVSEDNSEDEISNLVKLDLLEEKEGSLSPASVGSDTLSDLGISSLQDGLALHI</original>
    <variation>MEGSPEENKEMRYYMLQ</variation>
    <location>
        <begin position="1"/>
        <end position="75"/>
    </location>
</feature>
<feature type="splice variant" id="VSP_026100" description="In isoform 4." evidence="21 23">
    <original>M</original>
    <variation>MWWSTLMSILRARSFWKWISTQTVRIIRAVRAHFGGIM</variation>
    <location>
        <position position="1"/>
    </location>
</feature>
<feature type="sequence variant" id="VAR_042941" description="In dbSNP:rs2287351.">
    <original>R</original>
    <variation>W</variation>
    <location>
        <position position="838"/>
    </location>
</feature>
<feature type="sequence variant" id="VAR_036514" description="In a colorectal cancer sample; somatic mutation; dbSNP:rs1357271377." evidence="14">
    <original>R</original>
    <variation>Q</variation>
    <location>
        <position position="1687"/>
    </location>
</feature>
<feature type="sequence variant" id="VAR_028929" description="Frequency &lt;0.004; may play a role in breast cancer susceptibility; dbSNP:rs146351326." evidence="11">
    <original>A</original>
    <variation>V</variation>
    <location>
        <position position="2271"/>
    </location>
</feature>
<feature type="mutagenesis site" description="No effect on interaction with BRCA1." evidence="13">
    <original>S</original>
    <variation>A</variation>
    <location>
        <position position="78"/>
    </location>
</feature>
<feature type="mutagenesis site" description="No effect on interaction with BRCA1." evidence="13">
    <original>S</original>
    <variation>A</variation>
    <location>
        <position position="344"/>
    </location>
</feature>
<feature type="mutagenesis site" description="No effect on interaction with BRCA1." evidence="13">
    <original>S</original>
    <variation>A</variation>
    <location>
        <position position="432"/>
    </location>
</feature>
<feature type="mutagenesis site" description="No effect on interaction with BRCA1." evidence="13">
    <original>S</original>
    <variation>A</variation>
    <location>
        <position position="1201"/>
    </location>
</feature>
<feature type="mutagenesis site" description="Abolishes interaction with BRCA1." evidence="13">
    <original>S</original>
    <variation>A</variation>
    <location>
        <position position="1263"/>
    </location>
</feature>
<feature type="mutagenesis site" description="No effect on interaction with BRCA1." evidence="13">
    <original>S</original>
    <variation>A</variation>
    <location>
        <position position="1585"/>
    </location>
</feature>
<feature type="mutagenesis site" description="No effect on interaction with BRCA1." evidence="13">
    <original>S</original>
    <variation>A</variation>
    <location>
        <position position="1952"/>
    </location>
</feature>
<feature type="mutagenesis site" description="No effect on interaction with BRCA1." evidence="13">
    <original>S</original>
    <variation>A</variation>
    <location>
        <position position="2211"/>
    </location>
</feature>
<feature type="sequence conflict" description="In Ref. 1; AAC50139." evidence="24" ref="1">
    <original>S</original>
    <variation>A</variation>
    <location>
        <position position="66"/>
    </location>
</feature>
<feature type="sequence conflict" description="In Ref. 1; AAC50139." evidence="24" ref="1">
    <original>M</original>
    <variation>W</variation>
    <location>
        <position position="79"/>
    </location>
</feature>
<feature type="sequence conflict" description="In Ref. 1; AAC50139." evidence="24" ref="1">
    <original>R</original>
    <variation>G</variation>
    <location>
        <position position="89"/>
    </location>
</feature>
<feature type="sequence conflict" description="In Ref. 1; AAC50139." evidence="24" ref="1">
    <original>P</original>
    <variation>A</variation>
    <location>
        <position position="182"/>
    </location>
</feature>
<feature type="sequence conflict" description="In Ref. 1; AAC50139." evidence="24" ref="1">
    <original>S</original>
    <variation>N</variation>
    <location>
        <position position="234"/>
    </location>
</feature>
<feature type="sequence conflict" description="In Ref. 1; AAC50139." evidence="24" ref="1">
    <original>Q</original>
    <variation>K</variation>
    <location>
        <position position="299"/>
    </location>
</feature>
<feature type="sequence conflict" description="In Ref. 1; AAC50139." evidence="24" ref="1">
    <original>E</original>
    <variation>K</variation>
    <location>
        <position position="303"/>
    </location>
</feature>
<feature type="sequence conflict" description="In Ref. 2; AAP94122." evidence="24" ref="2">
    <original>A</original>
    <variation>V</variation>
    <location>
        <position position="364"/>
    </location>
</feature>
<feature type="sequence conflict" description="In Ref. 1; AAC50139." evidence="24" ref="1">
    <original>H</original>
    <variation>Q</variation>
    <location>
        <position position="446"/>
    </location>
</feature>
<feature type="sequence conflict" description="In Ref. 1; AAC50139." evidence="24" ref="1">
    <original>D</original>
    <variation>N</variation>
    <location>
        <position position="494"/>
    </location>
</feature>
<feature type="sequence conflict" description="In Ref. 1; AAC50139." evidence="24" ref="1">
    <original>D</original>
    <variation>G</variation>
    <location>
        <position position="554"/>
    </location>
</feature>
<feature type="sequence conflict" description="In Ref. 1; AAC50139." evidence="24" ref="1">
    <original>Q</original>
    <variation>R</variation>
    <location>
        <position position="622"/>
    </location>
</feature>
<feature type="sequence conflict" description="In Ref. 1; AAC50139." evidence="24" ref="1">
    <original>A</original>
    <variation>G</variation>
    <location>
        <position position="640"/>
    </location>
</feature>
<feature type="sequence conflict" description="In Ref. 2; AAP94122." evidence="24" ref="2">
    <original>V</original>
    <variation>I</variation>
    <location>
        <position position="814"/>
    </location>
</feature>
<feature type="sequence conflict" description="In Ref. 1; AAC50139." evidence="24" ref="1">
    <original>N</original>
    <variation>S</variation>
    <location>
        <position position="1061"/>
    </location>
</feature>
<feature type="sequence conflict" description="In Ref. 1; AAC50139." evidence="24" ref="1">
    <original>EL</original>
    <variation>DV</variation>
    <location>
        <begin position="1094"/>
        <end position="1095"/>
    </location>
</feature>
<feature type="sequence conflict" description="In Ref. 1; AAC50139." evidence="24" ref="1">
    <original>S</original>
    <variation>A</variation>
    <location>
        <position position="1225"/>
    </location>
</feature>
<feature type="sequence conflict" description="In Ref. 1; AAC50139." evidence="24" ref="1">
    <original>S</original>
    <variation>C</variation>
    <location>
        <position position="1257"/>
    </location>
</feature>
<feature type="sequence conflict" description="In Ref. 1; AAC50139." evidence="24" ref="1">
    <original>C</original>
    <variation>G</variation>
    <location>
        <position position="1297"/>
    </location>
</feature>
<feature type="sequence conflict" description="In Ref. 1; AAC50139." evidence="24" ref="1">
    <original>V</original>
    <variation>A</variation>
    <location>
        <position position="1320"/>
    </location>
</feature>
<feature type="sequence conflict" description="In Ref. 1; AAC50139." evidence="24" ref="1">
    <original>N</original>
    <variation>S</variation>
    <location>
        <position position="1444"/>
    </location>
</feature>
<feature type="sequence conflict" description="In Ref. 1; AAC50139." evidence="24" ref="1">
    <original>F</original>
    <variation>L</variation>
    <location>
        <position position="1474"/>
    </location>
</feature>
<feature type="sequence conflict" description="In Ref. 1; AAC50139." evidence="24" ref="1">
    <original>TF</original>
    <variation>SL</variation>
    <location>
        <begin position="1665"/>
        <end position="1666"/>
    </location>
</feature>
<feature type="sequence conflict" description="In Ref. 1; AAC50139." evidence="24" ref="1">
    <original>I</original>
    <variation>V</variation>
    <location>
        <position position="1677"/>
    </location>
</feature>
<feature type="sequence conflict" description="In Ref. 1; AAC50139." evidence="24" ref="1">
    <original>P</original>
    <variation>S</variation>
    <location>
        <position position="1741"/>
    </location>
</feature>
<feature type="sequence conflict" description="In Ref. 1; AAC50139." evidence="24" ref="1">
    <original>S</original>
    <variation>G</variation>
    <location>
        <position position="1762"/>
    </location>
</feature>
<feature type="sequence conflict" description="In Ref. 1; AAC50139." evidence="24" ref="1">
    <original>C</original>
    <variation>S</variation>
    <location>
        <position position="1822"/>
    </location>
</feature>
<feature type="sequence conflict" description="In Ref. 1; AAC50139." evidence="24" ref="1">
    <original>M</original>
    <variation>T</variation>
    <location>
        <position position="1875"/>
    </location>
</feature>
<feature type="sequence conflict" description="In Ref. 1; AAC50139." evidence="24" ref="1">
    <original>D</original>
    <variation>G</variation>
    <location>
        <position position="1888"/>
    </location>
</feature>
<feature type="sequence conflict" description="In Ref. 1; AAC50139." evidence="24" ref="1">
    <original>I</original>
    <variation>V</variation>
    <location>
        <position position="1997"/>
    </location>
</feature>
<feature type="sequence conflict" description="In Ref. 1; AAC50139." evidence="24" ref="1">
    <original>Q</original>
    <variation>H</variation>
    <location>
        <position position="2013"/>
    </location>
</feature>
<feature type="sequence conflict" description="In Ref. 1; AAC50139." evidence="24" ref="1">
    <original>D</original>
    <variation>H</variation>
    <location>
        <position position="2058"/>
    </location>
</feature>
<feature type="sequence conflict" description="In Ref. 1; AAC50139." evidence="24" ref="1">
    <original>C</original>
    <variation>S</variation>
    <location>
        <position position="2075"/>
    </location>
</feature>
<feature type="sequence conflict" description="In Ref. 1; AAC50139." evidence="24" ref="1">
    <original>SS</original>
    <variation>PT</variation>
    <location>
        <begin position="2098"/>
        <end position="2099"/>
    </location>
</feature>
<feature type="sequence conflict" description="In Ref. 1; AAC50139." evidence="24" ref="1">
    <original>TA</original>
    <variation>PT</variation>
    <location>
        <begin position="2158"/>
        <end position="2159"/>
    </location>
</feature>
<feature type="sequence conflict" description="In Ref. 1; AAC50139." evidence="24" ref="1">
    <original>N</original>
    <variation>S</variation>
    <location>
        <position position="2166"/>
    </location>
</feature>
<feature type="sequence conflict" description="In Ref. 1; AAC50139." evidence="24" ref="1">
    <original>N</original>
    <variation>S</variation>
    <location>
        <position position="2234"/>
    </location>
</feature>
<feature type="sequence conflict" description="In Ref. 2; AAP94122." evidence="24" ref="2">
    <original>H</original>
    <variation>R</variation>
    <location>
        <position position="2321"/>
    </location>
</feature>
<feature type="helix" evidence="40">
    <location>
        <begin position="105"/>
        <end position="111"/>
    </location>
</feature>
<feature type="strand" evidence="40">
    <location>
        <begin position="120"/>
        <end position="123"/>
    </location>
</feature>
<feature type="helix" evidence="40">
    <location>
        <begin position="127"/>
        <end position="145"/>
    </location>
</feature>
<feature type="strand" evidence="40">
    <location>
        <begin position="150"/>
        <end position="157"/>
    </location>
</feature>
<feature type="helix" evidence="40">
    <location>
        <begin position="159"/>
        <end position="163"/>
    </location>
</feature>
<feature type="helix" evidence="40">
    <location>
        <begin position="168"/>
        <end position="171"/>
    </location>
</feature>
<feature type="strand" evidence="40">
    <location>
        <begin position="172"/>
        <end position="177"/>
    </location>
</feature>
<feature type="helix" evidence="40">
    <location>
        <begin position="183"/>
        <end position="185"/>
    </location>
</feature>
<feature type="turn" evidence="40">
    <location>
        <begin position="186"/>
        <end position="188"/>
    </location>
</feature>
<feature type="helix" evidence="40">
    <location>
        <begin position="190"/>
        <end position="199"/>
    </location>
</feature>
<feature type="strand" evidence="40">
    <location>
        <begin position="203"/>
        <end position="206"/>
    </location>
</feature>
<feature type="turn" evidence="40">
    <location>
        <begin position="211"/>
        <end position="214"/>
    </location>
</feature>
<feature type="helix" evidence="40">
    <location>
        <begin position="217"/>
        <end position="224"/>
    </location>
</feature>
<feature type="strand" evidence="40">
    <location>
        <begin position="228"/>
        <end position="231"/>
    </location>
</feature>
<feature type="helix" evidence="40">
    <location>
        <begin position="234"/>
        <end position="241"/>
    </location>
</feature>
<feature type="helix" evidence="40">
    <location>
        <begin position="243"/>
        <end position="252"/>
    </location>
</feature>
<feature type="turn" evidence="40">
    <location>
        <begin position="261"/>
        <end position="264"/>
    </location>
</feature>
<feature type="helix" evidence="40">
    <location>
        <begin position="283"/>
        <end position="289"/>
    </location>
</feature>
<feature type="helix" evidence="40">
    <location>
        <begin position="294"/>
        <end position="304"/>
    </location>
</feature>
<feature type="strand" evidence="40">
    <location>
        <begin position="306"/>
        <end position="312"/>
    </location>
</feature>
<feature type="strand" evidence="40">
    <location>
        <begin position="320"/>
        <end position="324"/>
    </location>
</feature>
<feature type="turn" evidence="40">
    <location>
        <begin position="327"/>
        <end position="329"/>
    </location>
</feature>
<feature type="helix" evidence="40">
    <location>
        <begin position="330"/>
        <end position="340"/>
    </location>
</feature>
<feature type="strand" evidence="40">
    <location>
        <begin position="346"/>
        <end position="350"/>
    </location>
</feature>
<feature type="strand" evidence="40">
    <location>
        <begin position="356"/>
        <end position="364"/>
    </location>
</feature>
<feature type="strand" evidence="40">
    <location>
        <begin position="370"/>
        <end position="382"/>
    </location>
</feature>
<feature type="strand" evidence="40">
    <location>
        <begin position="385"/>
        <end position="392"/>
    </location>
</feature>
<feature type="helix" evidence="40">
    <location>
        <begin position="398"/>
        <end position="415"/>
    </location>
</feature>
<feature type="strand" evidence="40">
    <location>
        <begin position="419"/>
        <end position="427"/>
    </location>
</feature>
<feature type="turn" evidence="42">
    <location>
        <begin position="429"/>
        <end position="431"/>
    </location>
</feature>
<feature type="strand" evidence="40">
    <location>
        <begin position="433"/>
        <end position="439"/>
    </location>
</feature>
<feature type="turn" evidence="40">
    <location>
        <begin position="444"/>
        <end position="446"/>
    </location>
</feature>
<feature type="helix" evidence="40">
    <location>
        <begin position="447"/>
        <end position="453"/>
    </location>
</feature>
<feature type="helix" evidence="40">
    <location>
        <begin position="457"/>
        <end position="465"/>
    </location>
</feature>
<feature type="helix" evidence="40">
    <location>
        <begin position="470"/>
        <end position="472"/>
    </location>
</feature>
<feature type="helix" evidence="40">
    <location>
        <begin position="474"/>
        <end position="479"/>
    </location>
</feature>
<feature type="strand" evidence="42">
    <location>
        <begin position="484"/>
        <end position="486"/>
    </location>
</feature>
<feature type="turn" evidence="40">
    <location>
        <begin position="492"/>
        <end position="495"/>
    </location>
</feature>
<feature type="strand" evidence="40">
    <location>
        <begin position="496"/>
        <end position="498"/>
    </location>
</feature>
<feature type="strand" evidence="40">
    <location>
        <begin position="503"/>
        <end position="510"/>
    </location>
</feature>
<feature type="turn" evidence="42">
    <location>
        <begin position="516"/>
        <end position="519"/>
    </location>
</feature>
<feature type="strand" evidence="40">
    <location>
        <begin position="526"/>
        <end position="530"/>
    </location>
</feature>
<feature type="strand" evidence="40">
    <location>
        <begin position="537"/>
        <end position="542"/>
    </location>
</feature>
<feature type="strand" evidence="40">
    <location>
        <begin position="557"/>
        <end position="566"/>
    </location>
</feature>
<feature type="helix" evidence="40">
    <location>
        <begin position="567"/>
        <end position="582"/>
    </location>
</feature>
<feature type="helix" evidence="40">
    <location>
        <begin position="589"/>
        <end position="599"/>
    </location>
</feature>
<feature type="helix" evidence="40">
    <location>
        <begin position="601"/>
        <end position="604"/>
    </location>
</feature>
<feature type="helix" evidence="40">
    <location>
        <begin position="612"/>
        <end position="616"/>
    </location>
</feature>
<feature type="helix" evidence="42">
    <location>
        <begin position="628"/>
        <end position="656"/>
    </location>
</feature>
<feature type="strand" evidence="42">
    <location>
        <begin position="670"/>
        <end position="676"/>
    </location>
</feature>
<feature type="strand" evidence="42">
    <location>
        <begin position="679"/>
        <end position="697"/>
    </location>
</feature>
<feature type="strand" evidence="42">
    <location>
        <begin position="700"/>
        <end position="708"/>
    </location>
</feature>
<feature type="strand" evidence="42">
    <location>
        <begin position="714"/>
        <end position="720"/>
    </location>
</feature>
<feature type="strand" evidence="42">
    <location>
        <begin position="722"/>
        <end position="729"/>
    </location>
</feature>
<feature type="strand" evidence="42">
    <location>
        <begin position="731"/>
        <end position="738"/>
    </location>
</feature>
<feature type="strand" evidence="42">
    <location>
        <begin position="741"/>
        <end position="746"/>
    </location>
</feature>
<feature type="strand" evidence="42">
    <location>
        <begin position="753"/>
        <end position="755"/>
    </location>
</feature>
<feature type="strand" evidence="42">
    <location>
        <begin position="757"/>
        <end position="767"/>
    </location>
</feature>
<feature type="strand" evidence="42">
    <location>
        <begin position="778"/>
        <end position="784"/>
    </location>
</feature>
<feature type="strand" evidence="42">
    <location>
        <begin position="787"/>
        <end position="792"/>
    </location>
</feature>
<feature type="strand" evidence="42">
    <location>
        <begin position="797"/>
        <end position="803"/>
    </location>
</feature>
<feature type="strand" evidence="42">
    <location>
        <begin position="805"/>
        <end position="809"/>
    </location>
</feature>
<feature type="strand" evidence="42">
    <location>
        <begin position="814"/>
        <end position="819"/>
    </location>
</feature>
<feature type="helix" evidence="42">
    <location>
        <begin position="850"/>
        <end position="864"/>
    </location>
</feature>
<feature type="turn" evidence="42">
    <location>
        <begin position="871"/>
        <end position="876"/>
    </location>
</feature>
<feature type="helix" evidence="42">
    <location>
        <begin position="878"/>
        <end position="889"/>
    </location>
</feature>
<feature type="helix" evidence="42">
    <location>
        <begin position="894"/>
        <end position="904"/>
    </location>
</feature>
<feature type="helix" evidence="42">
    <location>
        <begin position="912"/>
        <end position="927"/>
    </location>
</feature>
<feature type="helix" evidence="42">
    <location>
        <begin position="938"/>
        <end position="951"/>
    </location>
</feature>
<feature type="turn" evidence="42">
    <location>
        <begin position="955"/>
        <end position="958"/>
    </location>
</feature>
<feature type="helix" evidence="42">
    <location>
        <begin position="959"/>
        <end position="964"/>
    </location>
</feature>
<feature type="helix" evidence="42">
    <location>
        <begin position="966"/>
        <end position="974"/>
    </location>
</feature>
<feature type="helix" evidence="42">
    <location>
        <begin position="978"/>
        <end position="998"/>
    </location>
</feature>
<feature type="helix" evidence="42">
    <location>
        <begin position="1006"/>
        <end position="1016"/>
    </location>
</feature>
<feature type="helix" evidence="42">
    <location>
        <begin position="1022"/>
        <end position="1032"/>
    </location>
</feature>
<feature type="helix" evidence="42">
    <location>
        <begin position="1034"/>
        <end position="1046"/>
    </location>
</feature>
<feature type="strand" evidence="42">
    <location>
        <begin position="1049"/>
        <end position="1051"/>
    </location>
</feature>
<feature type="helix" evidence="42">
    <location>
        <begin position="1059"/>
        <end position="1066"/>
    </location>
</feature>
<feature type="helix" evidence="42">
    <location>
        <begin position="1072"/>
        <end position="1074"/>
    </location>
</feature>
<feature type="helix" evidence="42">
    <location>
        <begin position="1075"/>
        <end position="1087"/>
    </location>
</feature>
<feature type="helix" evidence="42">
    <location>
        <begin position="1094"/>
        <end position="1106"/>
    </location>
</feature>
<feature type="helix" evidence="42">
    <location>
        <begin position="1116"/>
        <end position="1124"/>
    </location>
</feature>
<feature type="turn" evidence="42">
    <location>
        <begin position="1131"/>
        <end position="1133"/>
    </location>
</feature>
<feature type="helix" evidence="42">
    <location>
        <begin position="1134"/>
        <end position="1136"/>
    </location>
</feature>
<feature type="turn" evidence="42">
    <location>
        <begin position="1140"/>
        <end position="1142"/>
    </location>
</feature>
<feature type="helix" evidence="42">
    <location>
        <begin position="1145"/>
        <end position="1157"/>
    </location>
</feature>
<feature type="strand" evidence="42">
    <location>
        <begin position="1159"/>
        <end position="1169"/>
    </location>
</feature>
<feature type="strand" evidence="42">
    <location>
        <begin position="1172"/>
        <end position="1174"/>
    </location>
</feature>
<feature type="strand" evidence="42">
    <location>
        <begin position="1177"/>
        <end position="1183"/>
    </location>
</feature>
<feature type="strand" evidence="42">
    <location>
        <begin position="1185"/>
        <end position="1187"/>
    </location>
</feature>
<feature type="strand" evidence="42">
    <location>
        <begin position="1233"/>
        <end position="1240"/>
    </location>
</feature>
<feature type="helix" evidence="42">
    <location>
        <begin position="1243"/>
        <end position="1247"/>
    </location>
</feature>
<feature type="helix" evidence="42">
    <location>
        <begin position="1249"/>
        <end position="1252"/>
    </location>
</feature>
<feature type="strand" evidence="42">
    <location>
        <begin position="1287"/>
        <end position="1294"/>
    </location>
</feature>
<feature type="helix" evidence="42">
    <location>
        <begin position="1301"/>
        <end position="1314"/>
    </location>
</feature>
<feature type="helix" evidence="42">
    <location>
        <begin position="1317"/>
        <end position="1320"/>
    </location>
</feature>
<feature type="strand" evidence="42">
    <location>
        <begin position="1324"/>
        <end position="1331"/>
    </location>
</feature>
<feature type="strand" evidence="42">
    <location>
        <begin position="1354"/>
        <end position="1358"/>
    </location>
</feature>
<feature type="strand" evidence="42">
    <location>
        <begin position="1361"/>
        <end position="1363"/>
    </location>
</feature>
<feature type="strand" evidence="42">
    <location>
        <begin position="1368"/>
        <end position="1370"/>
    </location>
</feature>
<feature type="helix" evidence="42">
    <location>
        <begin position="1375"/>
        <end position="1377"/>
    </location>
</feature>
<feature type="turn" evidence="42">
    <location>
        <begin position="1378"/>
        <end position="1382"/>
    </location>
</feature>
<feature type="helix" evidence="42">
    <location>
        <begin position="1383"/>
        <end position="1386"/>
    </location>
</feature>
<feature type="strand" evidence="42">
    <location>
        <begin position="1389"/>
        <end position="1394"/>
    </location>
</feature>
<feature type="strand" evidence="42">
    <location>
        <begin position="1401"/>
        <end position="1408"/>
    </location>
</feature>
<feature type="strand" evidence="42">
    <location>
        <begin position="1412"/>
        <end position="1414"/>
    </location>
</feature>
<feature type="strand" evidence="42">
    <location>
        <begin position="1419"/>
        <end position="1427"/>
    </location>
</feature>
<feature type="helix" evidence="42">
    <location>
        <begin position="1439"/>
        <end position="1462"/>
    </location>
</feature>
<feature type="strand" evidence="42">
    <location>
        <begin position="1471"/>
        <end position="1481"/>
    </location>
</feature>
<feature type="helix" evidence="42">
    <location>
        <begin position="1485"/>
        <end position="1498"/>
    </location>
</feature>
<feature type="helix" evidence="42">
    <location>
        <begin position="1500"/>
        <end position="1505"/>
    </location>
</feature>
<feature type="strand" evidence="42">
    <location>
        <begin position="1508"/>
        <end position="1517"/>
    </location>
</feature>
<feature type="strand" evidence="42">
    <location>
        <begin position="1526"/>
        <end position="1533"/>
    </location>
</feature>
<feature type="strand" evidence="42">
    <location>
        <begin position="1541"/>
        <end position="1548"/>
    </location>
</feature>
<feature type="strand" evidence="42">
    <location>
        <begin position="1551"/>
        <end position="1554"/>
    </location>
</feature>
<feature type="strand" evidence="42">
    <location>
        <begin position="1557"/>
        <end position="1559"/>
    </location>
</feature>
<feature type="turn" evidence="42">
    <location>
        <begin position="1567"/>
        <end position="1570"/>
    </location>
</feature>
<feature type="turn" evidence="42">
    <location>
        <begin position="1584"/>
        <end position="1586"/>
    </location>
</feature>
<feature type="helix" evidence="42">
    <location>
        <begin position="1587"/>
        <end position="1592"/>
    </location>
</feature>
<feature type="helix" evidence="42">
    <location>
        <begin position="1598"/>
        <end position="1600"/>
    </location>
</feature>
<feature type="helix" evidence="42">
    <location>
        <begin position="1601"/>
        <end position="1615"/>
    </location>
</feature>
<feature type="helix" evidence="42">
    <location>
        <begin position="1616"/>
        <end position="1618"/>
    </location>
</feature>
<feature type="helix" evidence="42">
    <location>
        <begin position="1628"/>
        <end position="1630"/>
    </location>
</feature>
<feature type="strand" evidence="42">
    <location>
        <begin position="1632"/>
        <end position="1639"/>
    </location>
</feature>
<feature type="strand" evidence="42">
    <location>
        <begin position="1641"/>
        <end position="1643"/>
    </location>
</feature>
<feature type="strand" evidence="42">
    <location>
        <begin position="1645"/>
        <end position="1648"/>
    </location>
</feature>
<feature type="strand" evidence="42">
    <location>
        <begin position="1656"/>
        <end position="1666"/>
    </location>
</feature>
<feature type="strand" evidence="42">
    <location>
        <begin position="1675"/>
        <end position="1682"/>
    </location>
</feature>
<feature type="turn" evidence="42">
    <location>
        <begin position="1684"/>
        <end position="1688"/>
    </location>
</feature>
<feature type="helix" evidence="42">
    <location>
        <begin position="1693"/>
        <end position="1709"/>
    </location>
</feature>
<feature type="strand" evidence="42">
    <location>
        <begin position="1713"/>
        <end position="1717"/>
    </location>
</feature>
<feature type="helix" evidence="42">
    <location>
        <begin position="1728"/>
        <end position="1731"/>
    </location>
</feature>
<feature type="strand" evidence="42">
    <location>
        <begin position="1735"/>
        <end position="1742"/>
    </location>
</feature>
<feature type="helix" evidence="42">
    <location>
        <begin position="1744"/>
        <end position="1746"/>
    </location>
</feature>
<feature type="strand" evidence="42">
    <location>
        <begin position="1748"/>
        <end position="1753"/>
    </location>
</feature>
<feature type="helix" evidence="42">
    <location>
        <begin position="1755"/>
        <end position="1758"/>
    </location>
</feature>
<feature type="turn" evidence="42">
    <location>
        <begin position="1759"/>
        <end position="1765"/>
    </location>
</feature>
<feature type="strand" evidence="42">
    <location>
        <begin position="1767"/>
        <end position="1774"/>
    </location>
</feature>
<feature type="strand" evidence="42">
    <location>
        <begin position="1777"/>
        <end position="1785"/>
    </location>
</feature>
<feature type="helix" evidence="42">
    <location>
        <begin position="1795"/>
        <end position="1810"/>
    </location>
</feature>
<feature type="turn" evidence="42">
    <location>
        <begin position="1811"/>
        <end position="1813"/>
    </location>
</feature>
<feature type="strand" evidence="42">
    <location>
        <begin position="1816"/>
        <end position="1825"/>
    </location>
</feature>
<feature type="helix" evidence="42">
    <location>
        <begin position="1827"/>
        <end position="1833"/>
    </location>
</feature>
<feature type="strand" evidence="42">
    <location>
        <begin position="1838"/>
        <end position="1843"/>
    </location>
</feature>
<feature type="strand" evidence="42">
    <location>
        <begin position="1845"/>
        <end position="1849"/>
    </location>
</feature>
<feature type="helix" evidence="42">
    <location>
        <begin position="1851"/>
        <end position="1858"/>
    </location>
</feature>
<feature type="helix" evidence="42">
    <location>
        <begin position="1867"/>
        <end position="1870"/>
    </location>
</feature>
<feature type="helix" evidence="42">
    <location>
        <begin position="1872"/>
        <end position="1875"/>
    </location>
</feature>
<feature type="turn" evidence="42">
    <location>
        <begin position="1876"/>
        <end position="1879"/>
    </location>
</feature>
<feature type="strand" evidence="42">
    <location>
        <begin position="1882"/>
        <end position="1887"/>
    </location>
</feature>
<feature type="helix" evidence="42">
    <location>
        <begin position="1888"/>
        <end position="1899"/>
    </location>
</feature>
<feature type="strand" evidence="42">
    <location>
        <begin position="1915"/>
        <end position="1917"/>
    </location>
</feature>
<feature type="helix" evidence="42">
    <location>
        <begin position="1934"/>
        <end position="1938"/>
    </location>
</feature>
<feature type="strand" evidence="42">
    <location>
        <begin position="1940"/>
        <end position="1942"/>
    </location>
</feature>
<feature type="strand" evidence="42">
    <location>
        <begin position="1944"/>
        <end position="1948"/>
    </location>
</feature>
<feature type="strand" evidence="42">
    <location>
        <begin position="1950"/>
        <end position="1952"/>
    </location>
</feature>
<feature type="strand" evidence="41">
    <location>
        <begin position="1961"/>
        <end position="1964"/>
    </location>
</feature>
<feature type="strand" evidence="42">
    <location>
        <begin position="1971"/>
        <end position="1978"/>
    </location>
</feature>
<feature type="strand" evidence="42">
    <location>
        <begin position="1981"/>
        <end position="1988"/>
    </location>
</feature>
<feature type="strand" evidence="42">
    <location>
        <begin position="1993"/>
        <end position="1997"/>
    </location>
</feature>
<feature type="strand" evidence="42">
    <location>
        <begin position="2009"/>
        <end position="2013"/>
    </location>
</feature>
<feature type="helix" evidence="42">
    <location>
        <begin position="2020"/>
        <end position="2036"/>
    </location>
</feature>
<feature type="strand" evidence="42">
    <location>
        <begin position="2040"/>
        <end position="2043"/>
    </location>
</feature>
<feature type="helix" evidence="42">
    <location>
        <begin position="2053"/>
        <end position="2057"/>
    </location>
</feature>
<feature type="helix" evidence="42">
    <location>
        <begin position="2060"/>
        <end position="2071"/>
    </location>
</feature>
<feature type="strand" evidence="42">
    <location>
        <begin position="2078"/>
        <end position="2082"/>
    </location>
</feature>
<feature type="strand" evidence="42">
    <location>
        <begin position="2086"/>
        <end position="2089"/>
    </location>
</feature>
<feature type="helix" evidence="42">
    <location>
        <begin position="2091"/>
        <end position="2094"/>
    </location>
</feature>
<feature type="helix" evidence="41">
    <location>
        <begin position="2098"/>
        <end position="2100"/>
    </location>
</feature>
<feature type="turn" evidence="42">
    <location>
        <begin position="2102"/>
        <end position="2104"/>
    </location>
</feature>
<feature type="strand" evidence="42">
    <location>
        <begin position="2105"/>
        <end position="2110"/>
    </location>
</feature>
<feature type="strand" evidence="42">
    <location>
        <begin position="2113"/>
        <end position="2118"/>
    </location>
</feature>
<feature type="helix" evidence="42">
    <location>
        <begin position="2120"/>
        <end position="2127"/>
    </location>
</feature>
<feature type="helix" evidence="42">
    <location>
        <begin position="2130"/>
        <end position="2137"/>
    </location>
</feature>
<feature type="turn" evidence="42">
    <location>
        <begin position="2138"/>
        <end position="2140"/>
    </location>
</feature>
<feature type="helix" evidence="42">
    <location>
        <begin position="2142"/>
        <end position="2151"/>
    </location>
</feature>
<feature type="helix" evidence="42">
    <location>
        <begin position="2158"/>
        <end position="2174"/>
    </location>
</feature>
<feature type="helix" evidence="42">
    <location>
        <begin position="2176"/>
        <end position="2188"/>
    </location>
</feature>
<feature type="helix" evidence="42">
    <location>
        <begin position="2193"/>
        <end position="2199"/>
    </location>
</feature>
<feature type="strand" evidence="42">
    <location>
        <begin position="2201"/>
        <end position="2206"/>
    </location>
</feature>
<feature type="helix" evidence="41">
    <location>
        <begin position="2208"/>
        <end position="2210"/>
    </location>
</feature>
<feature type="helix" evidence="42">
    <location>
        <begin position="2211"/>
        <end position="2235"/>
    </location>
</feature>
<feature type="helix" evidence="42">
    <location>
        <begin position="2241"/>
        <end position="2256"/>
    </location>
</feature>
<feature type="helix" evidence="42">
    <location>
        <begin position="2259"/>
        <end position="2262"/>
    </location>
</feature>
<feature type="helix" evidence="42">
    <location>
        <begin position="2267"/>
        <end position="2279"/>
    </location>
</feature>
<feature type="strand" evidence="42">
    <location>
        <begin position="2282"/>
        <end position="2284"/>
    </location>
</feature>
<feature type="helix" evidence="42">
    <location>
        <begin position="2287"/>
        <end position="2310"/>
    </location>
</feature>
<feature type="helix" evidence="42">
    <location>
        <begin position="2312"/>
        <end position="2314"/>
    </location>
</feature>
<feature type="helix" evidence="42">
    <location>
        <begin position="2315"/>
        <end position="2318"/>
    </location>
</feature>
<feature type="helix" evidence="42">
    <location>
        <begin position="2321"/>
        <end position="2323"/>
    </location>
</feature>
<feature type="helix" evidence="42">
    <location>
        <begin position="2328"/>
        <end position="2336"/>
    </location>
</feature>
<organism>
    <name type="scientific">Homo sapiens</name>
    <name type="common">Human</name>
    <dbReference type="NCBI Taxonomy" id="9606"/>
    <lineage>
        <taxon>Eukaryota</taxon>
        <taxon>Metazoa</taxon>
        <taxon>Chordata</taxon>
        <taxon>Craniata</taxon>
        <taxon>Vertebrata</taxon>
        <taxon>Euteleostomi</taxon>
        <taxon>Mammalia</taxon>
        <taxon>Eutheria</taxon>
        <taxon>Euarchontoglires</taxon>
        <taxon>Primates</taxon>
        <taxon>Haplorrhini</taxon>
        <taxon>Catarrhini</taxon>
        <taxon>Hominidae</taxon>
        <taxon>Homo</taxon>
    </lineage>
</organism>
<keyword id="KW-0002">3D-structure</keyword>
<keyword id="KW-0007">Acetylation</keyword>
<keyword id="KW-0021">Allosteric enzyme</keyword>
<keyword id="KW-0877">Alternative promoter usage</keyword>
<keyword id="KW-0067">ATP-binding</keyword>
<keyword id="KW-0092">Biotin</keyword>
<keyword id="KW-0963">Cytoplasm</keyword>
<keyword id="KW-0903">Direct protein sequencing</keyword>
<keyword id="KW-0275">Fatty acid biosynthesis</keyword>
<keyword id="KW-0276">Fatty acid metabolism</keyword>
<keyword id="KW-0436">Ligase</keyword>
<keyword id="KW-0444">Lipid biosynthesis</keyword>
<keyword id="KW-0443">Lipid metabolism</keyword>
<keyword id="KW-0460">Magnesium</keyword>
<keyword id="KW-0464">Manganese</keyword>
<keyword id="KW-0479">Metal-binding</keyword>
<keyword id="KW-0511">Multifunctional enzyme</keyword>
<keyword id="KW-0547">Nucleotide-binding</keyword>
<keyword id="KW-0597">Phosphoprotein</keyword>
<keyword id="KW-1267">Proteomics identification</keyword>
<keyword id="KW-1185">Reference proteome</keyword>
<reference key="1">
    <citation type="journal article" date="1995" name="Proc. Natl. Acad. Sci. U.S.A.">
        <title>Human acetyl-CoA carboxylase: characterization, molecular cloning, and evidence for two isoforms.</title>
        <authorList>
            <person name="Abu-Elheiga L."/>
            <person name="Jayakumar A."/>
            <person name="Baldini A."/>
            <person name="Chirala S.S."/>
            <person name="Wakil S.J."/>
        </authorList>
    </citation>
    <scope>NUCLEOTIDE SEQUENCE [MRNA] (ISOFORM 1)</scope>
    <source>
        <tissue>Liver</tissue>
    </source>
</reference>
<reference key="2">
    <citation type="journal article" date="2003" name="Proc. Natl. Acad. Sci. U.S.A.">
        <title>Human acetyl-CoA carboxylase 1 gene: presence of three promoters and heterogeneity at the 5'-untranslated mRNA region.</title>
        <authorList>
            <person name="Mao J."/>
            <person name="Chirala S.S."/>
            <person name="Wakil S.J."/>
        </authorList>
    </citation>
    <scope>NUCLEOTIDE SEQUENCE [MRNA] (ISOFORM 1)</scope>
    <scope>NUCLEOTIDE SEQUENCE [MRNA] OF 1-366 (ISOFORMS 2 AND 3)</scope>
    <scope>NUCLEOTIDE SEQUENCE [MRNA] OF 1-120 (ISOFORM 4)</scope>
    <source>
        <tissue>Adipocyte</tissue>
    </source>
</reference>
<reference key="3">
    <citation type="journal article" date="2004" name="Carcinogenesis">
        <title>Acetyl-CoA carboxylase alpha gene and breast cancer susceptibility.</title>
        <authorList>
            <person name="Sinilnikova O.M."/>
            <person name="Ginolhac S.M."/>
            <person name="Magnard C."/>
            <person name="Leone M."/>
            <person name="Anczukow O."/>
            <person name="Hughes D."/>
            <person name="Moreau K."/>
            <person name="Thompson D."/>
            <person name="Coutanson C."/>
            <person name="Hall J."/>
            <person name="Romestaing P."/>
            <person name="Gerard J.-P."/>
            <person name="Bonadona V."/>
            <person name="Lasset C."/>
            <person name="Goldgar D.E."/>
            <person name="Joulin V."/>
            <person name="Venezia N.D."/>
            <person name="Lenoir G.M."/>
        </authorList>
    </citation>
    <scope>NUCLEOTIDE SEQUENCE [MRNA] (ISOFORM 1)</scope>
    <scope>VARIANT VAL-2271</scope>
</reference>
<reference key="4">
    <citation type="journal article" date="2008" name="DNA Res.">
        <title>Fine expression profiling of full-length transcripts using a size-unbiased cDNA library prepared with the vector-capping method.</title>
        <authorList>
            <person name="Oshikawa M."/>
            <person name="Sugai Y."/>
            <person name="Usami R."/>
            <person name="Ohtoko K."/>
            <person name="Toyama S."/>
            <person name="Kato S."/>
        </authorList>
    </citation>
    <scope>NUCLEOTIDE SEQUENCE [LARGE SCALE MRNA] (ISOFORM 1)</scope>
</reference>
<reference key="5">
    <citation type="submission" date="2005-07" db="EMBL/GenBank/DDBJ databases">
        <authorList>
            <person name="Mural R.J."/>
            <person name="Istrail S."/>
            <person name="Sutton G."/>
            <person name="Florea L."/>
            <person name="Halpern A.L."/>
            <person name="Mobarry C.M."/>
            <person name="Lippert R."/>
            <person name="Walenz B."/>
            <person name="Shatkay H."/>
            <person name="Dew I."/>
            <person name="Miller J.R."/>
            <person name="Flanigan M.J."/>
            <person name="Edwards N.J."/>
            <person name="Bolanos R."/>
            <person name="Fasulo D."/>
            <person name="Halldorsson B.V."/>
            <person name="Hannenhalli S."/>
            <person name="Turner R."/>
            <person name="Yooseph S."/>
            <person name="Lu F."/>
            <person name="Nusskern D.R."/>
            <person name="Shue B.C."/>
            <person name="Zheng X.H."/>
            <person name="Zhong F."/>
            <person name="Delcher A.L."/>
            <person name="Huson D.H."/>
            <person name="Kravitz S.A."/>
            <person name="Mouchard L."/>
            <person name="Reinert K."/>
            <person name="Remington K.A."/>
            <person name="Clark A.G."/>
            <person name="Waterman M.S."/>
            <person name="Eichler E.E."/>
            <person name="Adams M.D."/>
            <person name="Hunkapiller M.W."/>
            <person name="Myers E.W."/>
            <person name="Venter J.C."/>
        </authorList>
    </citation>
    <scope>NUCLEOTIDE SEQUENCE [LARGE SCALE GENOMIC DNA]</scope>
</reference>
<reference key="6">
    <citation type="journal article" date="2004" name="Genome Res.">
        <title>The status, quality, and expansion of the NIH full-length cDNA project: the Mammalian Gene Collection (MGC).</title>
        <authorList>
            <consortium name="The MGC Project Team"/>
        </authorList>
    </citation>
    <scope>NUCLEOTIDE SEQUENCE [LARGE SCALE MRNA] (ISOFORM 4)</scope>
    <source>
        <tissue>Brain</tissue>
    </source>
</reference>
<reference key="7">
    <citation type="journal article" date="2003" name="Biochim. Biophys. Acta">
        <title>Characterisation of an N-terminal variant of acetyl-CoA carboxylase-alpha: expression in human tissues and evolutionary aspects.</title>
        <authorList>
            <person name="Travers M.T."/>
            <person name="Vallance A.J."/>
            <person name="Clegg R.A."/>
            <person name="Thomson R."/>
            <person name="Price N.T."/>
            <person name="Barber M.C."/>
        </authorList>
    </citation>
    <scope>NUCLEOTIDE SEQUENCE [MRNA] OF 1-113 (ISOFORM 2)</scope>
    <scope>NUCLEOTIDE SEQUENCE [MRNA] OF 1-93 (ISOFORM 3)</scope>
    <source>
        <tissue>Mammary gland</tissue>
        <tissue>Testis</tissue>
    </source>
</reference>
<reference key="8">
    <citation type="journal article" date="2005" name="Genomics">
        <title>Asymmetric expression of transcripts derived from the shared promoter between the divergently oriented ACACA and TADA2L genes.</title>
        <authorList>
            <person name="Travers M.T."/>
            <person name="Cambot M."/>
            <person name="Kennedy H.T."/>
            <person name="Lenoir G.M."/>
            <person name="Barber M.C."/>
            <person name="Joulin V."/>
        </authorList>
    </citation>
    <scope>NUCLEOTIDE SEQUENCE [MRNA] OF 1-47 (ISOFORM 1)</scope>
    <source>
        <tissue>Testis</tissue>
    </source>
</reference>
<reference key="9">
    <citation type="submission" date="2007-07" db="UniProtKB">
        <authorList>
            <person name="Bienvenut W.V."/>
            <person name="Boldt K."/>
            <person name="von Kriegsheim A.F."/>
            <person name="Kolch W."/>
        </authorList>
    </citation>
    <scope>PROTEIN SEQUENCE OF 1-18; 39-45; 77-86; 99-111; 121-132; 153-170; 218-224; 267-276; 278-288; 323-335; 568-579; 589-615; 646-657; 748-755; 818-838; 985-992; 997-1008; 1083-1096; 1147-1169; 1192-1199; 1233-1247; 1283-1294; 1317-1325; 1327-1334; 1372-1385; 1401-1420; 1508-1514; 1553-1564; 1668-1687; 1714-1731; 1750-1759; 1782-1798; 1824-1833; 1838-1856; 1905-1916; 1922-1929; 1978-2009; 2063-2072; 2104-2111; 2115-2127; 2139-2161; 2200-2209; 2213-2218; 2221-2229 AND 2261-2293</scope>
    <scope>ACETYLATION AT MET-1</scope>
    <scope>PHOSPHORYLATION AT SER-80</scope>
    <scope>IDENTIFICATION BY MASS SPECTROMETRY</scope>
    <source>
        <tissue>Hepatoma</tissue>
    </source>
</reference>
<reference key="10">
    <citation type="journal article" date="2002" name="Oncogene">
        <title>BRCA1 interacts with acetyl-CoA carboxylase through its tandem of BRCT domains.</title>
        <authorList>
            <person name="Magnard C."/>
            <person name="Bachelier R."/>
            <person name="Vincent A."/>
            <person name="Jaquinod M."/>
            <person name="Kieffer S."/>
            <person name="Lenoir G.M."/>
            <person name="Venezia N.D."/>
        </authorList>
    </citation>
    <scope>INTERACTION WITH BRCA1</scope>
</reference>
<reference key="11">
    <citation type="journal article" date="2006" name="Cell">
        <title>Global, in vivo, and site-specific phosphorylation dynamics in signaling networks.</title>
        <authorList>
            <person name="Olsen J.V."/>
            <person name="Blagoev B."/>
            <person name="Gnad F."/>
            <person name="Macek B."/>
            <person name="Kumar C."/>
            <person name="Mortensen P."/>
            <person name="Mann M."/>
        </authorList>
    </citation>
    <scope>PHOSPHORYLATION [LARGE SCALE ANALYSIS] AT SER-29 AND SER-53</scope>
    <scope>IDENTIFICATION BY MASS SPECTROMETRY [LARGE SCALE ANALYSIS]</scope>
    <source>
        <tissue>Cervix carcinoma</tissue>
    </source>
</reference>
<reference key="12">
    <citation type="journal article" date="2006" name="J. Biol. Chem.">
        <title>BRCA1 affects lipid synthesis through its interaction with acetyl-CoA carboxylase.</title>
        <authorList>
            <person name="Moreau K."/>
            <person name="Dizin E."/>
            <person name="Ray H."/>
            <person name="Luquain C."/>
            <person name="Lefai E."/>
            <person name="Foufelle F."/>
            <person name="Billaud M."/>
            <person name="Lenoir G.M."/>
            <person name="Venezia N.D."/>
        </authorList>
    </citation>
    <scope>INTERACTION WITH BRCA1</scope>
    <scope>ACTIVITY REGULATION</scope>
</reference>
<reference key="13">
    <citation type="journal article" date="2006" name="J. Mol. Biol.">
        <title>ACCA phosphopeptide recognition by the BRCT repeats of BRCA1.</title>
        <authorList>
            <person name="Ray H."/>
            <person name="Moreau K."/>
            <person name="Dizin E."/>
            <person name="Callebaut I."/>
            <person name="Venezia N.D."/>
        </authorList>
    </citation>
    <scope>PHOSPHORYLATION AT SER-1263</scope>
    <scope>MUTAGENESIS OF SER-78; SER-344; SER-432; SER-1201; SER-1263; SER-1585; SER-1952 AND SER-2211</scope>
</reference>
<reference key="14">
    <citation type="journal article" date="1981" name="N. Engl. J. Med.">
        <title>Acetyl-CoA carboxylase deficiency: an inborn error of de novo fatty acid synthesis.</title>
        <authorList>
            <person name="Blom W."/>
            <person name="de Muinck Keizer S.M.P.F."/>
            <person name="Scholte H.R."/>
        </authorList>
    </citation>
    <scope>INVOLVEMENT IN ACACAD</scope>
</reference>
<reference key="15">
    <citation type="journal article" date="2008" name="J. Proteome Res.">
        <title>Combining protein-based IMAC, peptide-based IMAC, and MudPIT for efficient phosphoproteomic analysis.</title>
        <authorList>
            <person name="Cantin G.T."/>
            <person name="Yi W."/>
            <person name="Lu B."/>
            <person name="Park S.K."/>
            <person name="Xu T."/>
            <person name="Lee J.-D."/>
            <person name="Yates J.R. III"/>
        </authorList>
    </citation>
    <scope>PHOSPHORYLATION [LARGE SCALE ANALYSIS] AT SER-488</scope>
    <scope>IDENTIFICATION BY MASS SPECTROMETRY [LARGE SCALE ANALYSIS]</scope>
    <source>
        <tissue>Cervix carcinoma</tissue>
    </source>
</reference>
<reference key="16">
    <citation type="journal article" date="2008" name="Mol. Cell">
        <title>Kinase-selective enrichment enables quantitative phosphoproteomics of the kinome across the cell cycle.</title>
        <authorList>
            <person name="Daub H."/>
            <person name="Olsen J.V."/>
            <person name="Bairlein M."/>
            <person name="Gnad F."/>
            <person name="Oppermann F.S."/>
            <person name="Korner R."/>
            <person name="Greff Z."/>
            <person name="Keri G."/>
            <person name="Stemmann O."/>
            <person name="Mann M."/>
        </authorList>
    </citation>
    <scope>PHOSPHORYLATION [LARGE SCALE ANALYSIS] AT SER-29</scope>
    <scope>IDENTIFICATION BY MASS SPECTROMETRY [LARGE SCALE ANALYSIS]</scope>
    <source>
        <tissue>Cervix carcinoma</tissue>
    </source>
</reference>
<reference key="17">
    <citation type="journal article" date="2008" name="Proc. Natl. Acad. Sci. U.S.A.">
        <title>A quantitative atlas of mitotic phosphorylation.</title>
        <authorList>
            <person name="Dephoure N."/>
            <person name="Zhou C."/>
            <person name="Villen J."/>
            <person name="Beausoleil S.A."/>
            <person name="Bakalarski C.E."/>
            <person name="Elledge S.J."/>
            <person name="Gygi S.P."/>
        </authorList>
    </citation>
    <scope>PHOSPHORYLATION [LARGE SCALE ANALYSIS] AT SER-23; SER-25; SER-29 AND SER-80</scope>
    <scope>IDENTIFICATION BY MASS SPECTROMETRY [LARGE SCALE ANALYSIS]</scope>
    <source>
        <tissue>Cervix carcinoma</tissue>
    </source>
</reference>
<reference key="18">
    <citation type="journal article" date="2009" name="Anal. Chem.">
        <title>Lys-N and trypsin cover complementary parts of the phosphoproteome in a refined SCX-based approach.</title>
        <authorList>
            <person name="Gauci S."/>
            <person name="Helbig A.O."/>
            <person name="Slijper M."/>
            <person name="Krijgsveld J."/>
            <person name="Heck A.J."/>
            <person name="Mohammed S."/>
        </authorList>
    </citation>
    <scope>IDENTIFICATION BY MASS SPECTROMETRY [LARGE SCALE ANALYSIS]</scope>
</reference>
<reference key="19">
    <citation type="journal article" date="2009" name="Mol. Cell. Proteomics">
        <title>Large-scale proteomics analysis of the human kinome.</title>
        <authorList>
            <person name="Oppermann F.S."/>
            <person name="Gnad F."/>
            <person name="Olsen J.V."/>
            <person name="Hornberger R."/>
            <person name="Greff Z."/>
            <person name="Keri G."/>
            <person name="Mann M."/>
            <person name="Daub H."/>
        </authorList>
    </citation>
    <scope>ACETYLATION [LARGE SCALE ANALYSIS] AT MET-1</scope>
    <scope>PHOSPHORYLATION [LARGE SCALE ANALYSIS] AT SER-5 AND SER-29</scope>
    <scope>IDENTIFICATION BY MASS SPECTROMETRY [LARGE SCALE ANALYSIS]</scope>
</reference>
<reference key="20">
    <citation type="journal article" date="2009" name="Sci. Signal.">
        <title>Quantitative phosphoproteomic analysis of T cell receptor signaling reveals system-wide modulation of protein-protein interactions.</title>
        <authorList>
            <person name="Mayya V."/>
            <person name="Lundgren D.H."/>
            <person name="Hwang S.-I."/>
            <person name="Rezaul K."/>
            <person name="Wu L."/>
            <person name="Eng J.K."/>
            <person name="Rodionov V."/>
            <person name="Han D.K."/>
        </authorList>
    </citation>
    <scope>PHOSPHORYLATION [LARGE SCALE ANALYSIS] AT SER-23; SER-25 AND SER-29</scope>
    <scope>IDENTIFICATION BY MASS SPECTROMETRY [LARGE SCALE ANALYSIS]</scope>
    <source>
        <tissue>Leukemic T-cell</tissue>
    </source>
</reference>
<reference key="21">
    <citation type="journal article" date="2009" name="Science">
        <title>Lysine acetylation targets protein complexes and co-regulates major cellular functions.</title>
        <authorList>
            <person name="Choudhary C."/>
            <person name="Kumar C."/>
            <person name="Gnad F."/>
            <person name="Nielsen M.L."/>
            <person name="Rehman M."/>
            <person name="Walther T.C."/>
            <person name="Olsen J.V."/>
            <person name="Mann M."/>
        </authorList>
    </citation>
    <scope>ACETYLATION [LARGE SCALE ANALYSIS] AT LYS-1334</scope>
    <scope>IDENTIFICATION BY MASS SPECTROMETRY [LARGE SCALE ANALYSIS]</scope>
</reference>
<reference key="22">
    <citation type="journal article" date="2010" name="Proc. Natl. Acad. Sci. U.S.A.">
        <title>Induced polymerization of mammalian acetyl-CoA carboxylase by MIG12 provides a tertiary level of regulation of fatty acid synthesis.</title>
        <authorList>
            <person name="Kim C.W."/>
            <person name="Moon Y.A."/>
            <person name="Park S.W."/>
            <person name="Cheng D."/>
            <person name="Kwon H.J."/>
            <person name="Horton J.D."/>
        </authorList>
    </citation>
    <scope>FUNCTION</scope>
    <scope>CATALYTIC ACTIVITY</scope>
    <scope>PATHWAY</scope>
    <scope>SUBUNIT</scope>
    <scope>INTERACTION WITH MID1IP1</scope>
</reference>
<reference key="23">
    <citation type="journal article" date="2010" name="Proc. Natl. Acad. Sci. U.S.A.">
        <title>Crystal structure of Spot 14, a modulator of fatty acid synthesis.</title>
        <authorList>
            <person name="Colbert C.L."/>
            <person name="Kim C.W."/>
            <person name="Moon Y.A."/>
            <person name="Henry L."/>
            <person name="Palnitkar M."/>
            <person name="McKean W.B."/>
            <person name="Fitzgerald K."/>
            <person name="Deisenhofer J."/>
            <person name="Horton J.D."/>
            <person name="Kwon H.J."/>
        </authorList>
    </citation>
    <scope>FUNCTION</scope>
    <scope>CATALYTIC ACTIVITY</scope>
    <scope>PATHWAY</scope>
    <scope>SUBUNIT</scope>
    <scope>INTERACTION WITH MID1IP1</scope>
</reference>
<reference key="24">
    <citation type="journal article" date="2010" name="Sci. Signal.">
        <title>Quantitative phosphoproteomics reveals widespread full phosphorylation site occupancy during mitosis.</title>
        <authorList>
            <person name="Olsen J.V."/>
            <person name="Vermeulen M."/>
            <person name="Santamaria A."/>
            <person name="Kumar C."/>
            <person name="Miller M.L."/>
            <person name="Jensen L.J."/>
            <person name="Gnad F."/>
            <person name="Cox J."/>
            <person name="Jensen T.S."/>
            <person name="Nigg E.A."/>
            <person name="Brunak S."/>
            <person name="Mann M."/>
        </authorList>
    </citation>
    <scope>ACETYLATION [LARGE SCALE ANALYSIS] AT MET-1</scope>
    <scope>PHOSPHORYLATION [LARGE SCALE ANALYSIS] AT SER-5; SER-23; SER-29; SER-48 AND SER-80</scope>
    <scope>IDENTIFICATION BY MASS SPECTROMETRY [LARGE SCALE ANALYSIS]</scope>
    <source>
        <tissue>Cervix carcinoma</tissue>
    </source>
</reference>
<reference key="25">
    <citation type="journal article" date="2011" name="BMC Syst. Biol.">
        <title>Initial characterization of the human central proteome.</title>
        <authorList>
            <person name="Burkard T.R."/>
            <person name="Planyavsky M."/>
            <person name="Kaupe I."/>
            <person name="Breitwieser F.P."/>
            <person name="Buerckstuemmer T."/>
            <person name="Bennett K.L."/>
            <person name="Superti-Furga G."/>
            <person name="Colinge J."/>
        </authorList>
    </citation>
    <scope>IDENTIFICATION BY MASS SPECTROMETRY [LARGE SCALE ANALYSIS]</scope>
</reference>
<reference key="26">
    <citation type="journal article" date="2011" name="Sci. Signal.">
        <title>System-wide temporal characterization of the proteome and phosphoproteome of human embryonic stem cell differentiation.</title>
        <authorList>
            <person name="Rigbolt K.T."/>
            <person name="Prokhorova T.A."/>
            <person name="Akimov V."/>
            <person name="Henningsen J."/>
            <person name="Johansen P.T."/>
            <person name="Kratchmarova I."/>
            <person name="Kassem M."/>
            <person name="Mann M."/>
            <person name="Olsen J.V."/>
            <person name="Blagoev B."/>
        </authorList>
    </citation>
    <scope>PHOSPHORYLATION [LARGE SCALE ANALYSIS] AT SER-29 AND SER-80</scope>
    <scope>IDENTIFICATION BY MASS SPECTROMETRY [LARGE SCALE ANALYSIS]</scope>
</reference>
<reference key="27">
    <citation type="journal article" date="2013" name="J. Proteome Res.">
        <title>Toward a comprehensive characterization of a human cancer cell phosphoproteome.</title>
        <authorList>
            <person name="Zhou H."/>
            <person name="Di Palma S."/>
            <person name="Preisinger C."/>
            <person name="Peng M."/>
            <person name="Polat A.N."/>
            <person name="Heck A.J."/>
            <person name="Mohammed S."/>
        </authorList>
    </citation>
    <scope>PHOSPHORYLATION [LARGE SCALE ANALYSIS] AT SER-5; SER-25; SER-29; SER-80; THR-610; SER-835 AND THR-2153</scope>
    <scope>IDENTIFICATION BY MASS SPECTROMETRY [LARGE SCALE ANALYSIS]</scope>
    <source>
        <tissue>Cervix carcinoma</tissue>
        <tissue>Erythroleukemia</tissue>
    </source>
</reference>
<reference key="28">
    <citation type="journal article" date="2014" name="J. Proteomics">
        <title>An enzyme assisted RP-RPLC approach for in-depth analysis of human liver phosphoproteome.</title>
        <authorList>
            <person name="Bian Y."/>
            <person name="Song C."/>
            <person name="Cheng K."/>
            <person name="Dong M."/>
            <person name="Wang F."/>
            <person name="Huang J."/>
            <person name="Sun D."/>
            <person name="Wang L."/>
            <person name="Ye M."/>
            <person name="Zou H."/>
        </authorList>
    </citation>
    <scope>PHOSPHORYLATION [LARGE SCALE ANALYSIS] AT SER-25; SER-29 AND SER-1273</scope>
    <scope>IDENTIFICATION BY MASS SPECTROMETRY [LARGE SCALE ANALYSIS]</scope>
    <source>
        <tissue>Liver</tissue>
    </source>
</reference>
<reference key="29">
    <citation type="journal article" date="2008" name="Biochemistry">
        <title>Structural evidence for direct interactions between the BRCT domains of human BRCA1 and a phospho-peptide from human ACC1.</title>
        <authorList>
            <person name="Shen Y."/>
            <person name="Tong L."/>
        </authorList>
    </citation>
    <scope>X-RAY CRYSTALLOGRAPHY (3.21 ANGSTROMS) OF 1258-1270 IN COMPLEX WITH BRCA1</scope>
    <scope>INTERACTION WITH BRCA1</scope>
</reference>
<reference key="30">
    <citation type="submission" date="2011-05" db="PDB data bank">
        <title>Crystal Structure of Human Acetyl-Coa Carboxylase 1, Biotin Carboxylase (Bc) Domain.</title>
        <authorList>
            <person name="Muniz J.R.C."/>
            <person name="Froese D.S."/>
            <person name="Krysztofinska E."/>
            <person name="Vollmar M."/>
            <person name="Beltrami A."/>
            <person name="Krojer T."/>
            <person name="Allerston C.K."/>
            <person name="von Delft F."/>
            <person name="Arrowsmith C.H."/>
            <person name="Edwards A.M."/>
            <person name="Weigelt J."/>
            <person name="Bountra C."/>
            <person name="Yue W.W."/>
            <person name="Oppermann U."/>
        </authorList>
    </citation>
    <scope>X-RAY CRYSTALLOGRAPHY (2.30 ANGSTROMS) OF 78-617</scope>
</reference>
<reference key="31">
    <citation type="submission" date="2012-05" db="PDB data bank">
        <title>Crystal Structure of Human Acaca C-Terminal Domain.</title>
        <authorList>
            <person name="Froese D.S."/>
            <person name="Muniz J.R.C."/>
            <person name="Kiyani W."/>
            <person name="Krojer T."/>
            <person name="Vollmar M."/>
            <person name="von Delft F."/>
            <person name="Bountra C."/>
            <person name="Arrowsmith C.H."/>
            <person name="Edwards A."/>
            <person name="Oppermann U."/>
            <person name="Yue W.W."/>
        </authorList>
    </citation>
    <scope>X-RAY CRYSTALLOGRAPHY (2.80 ANGSTROMS) OF 1571-2338</scope>
</reference>
<reference key="32">
    <citation type="journal article" date="2018" name="Nature">
        <title>Structural basis for regulation of human acetyl-CoA carboxylase.</title>
        <authorList>
            <person name="Hunkeler M."/>
            <person name="Hagmann A."/>
            <person name="Stuttfeld E."/>
            <person name="Chami M."/>
            <person name="Guri Y."/>
            <person name="Stahlberg H."/>
            <person name="Maier T."/>
        </authorList>
    </citation>
    <scope>STRUCTURE BY ELECTRON MICROSCOPY (4.60 ANGSTROMS) OF OLIGOMER IN COMPLEX WITH BRCA1 BRCT DOMAIN</scope>
    <scope>FUNCTION</scope>
    <scope>CATALYTIC ACTIVITY</scope>
    <scope>COFACTOR</scope>
    <scope>ACTIVITY REGULATION</scope>
    <scope>SUBUNIT</scope>
    <scope>INTERACTION WITH BRCA1</scope>
    <scope>DOMAIN</scope>
    <scope>BIOTINYLATION</scope>
    <scope>PHOSPHORYLATION AT SER-80 AND SER-1263</scope>
</reference>
<reference key="33">
    <citation type="journal article" date="2006" name="Science">
        <title>The consensus coding sequences of human breast and colorectal cancers.</title>
        <authorList>
            <person name="Sjoeblom T."/>
            <person name="Jones S."/>
            <person name="Wood L.D."/>
            <person name="Parsons D.W."/>
            <person name="Lin J."/>
            <person name="Barber T.D."/>
            <person name="Mandelker D."/>
            <person name="Leary R.J."/>
            <person name="Ptak J."/>
            <person name="Silliman N."/>
            <person name="Szabo S."/>
            <person name="Buckhaults P."/>
            <person name="Farrell C."/>
            <person name="Meeh P."/>
            <person name="Markowitz S.D."/>
            <person name="Willis J."/>
            <person name="Dawson D."/>
            <person name="Willson J.K.V."/>
            <person name="Gazdar A.F."/>
            <person name="Hartigan J."/>
            <person name="Wu L."/>
            <person name="Liu C."/>
            <person name="Parmigiani G."/>
            <person name="Park B.H."/>
            <person name="Bachman K.E."/>
            <person name="Papadopoulos N."/>
            <person name="Vogelstein B."/>
            <person name="Kinzler K.W."/>
            <person name="Velculescu V.E."/>
        </authorList>
    </citation>
    <scope>VARIANT [LARGE SCALE ANALYSIS] GLN-1687</scope>
</reference>
<sequence length="2346" mass="265554">MDEPSPLAQPLELNQHSRFIIGSVSEDNSEDEISNLVKLDLLEEKEGSLSPASVGSDTLSDLGISSLQDGLALHIRSSMSGLHLVKQGRDRKKIDSQRDFTVASPAEFVTRFGGNKVIEKVLIANNGIAAVKCMRSIRRWSYEMFRNERAIRFVVMVTPEDLKANAEYIKMADHYVPVPGGPNNNNYANVELILDIAKRIPVQAVWAGWGHASENPKLPELLLKNGIAFMGPPSQAMWALGDKIASSIVAQTAGIPTLPWSGSGLRVDWQENDFSKRILNVPQELYEKGYVKDVDDGLQAAEEVGYPVMIKASEGGGGKGIRKVNNADDFPNLFRQVQAEVPGSPIFVMRLAKQSRHLEVQILADQYGNAISLFGRDCSVQRRHQKIIEEAPATIATPAVFEHMEQCAVKLAKMVGYVSAGTVEYLYSQDGSFYFLELNPRLQVEHPCTEMVADVNLPAAQLQIAMGIPLYRIKDIRMMYGVSPWGDSPIDFEDSAHVPCPRGHVIAARITSENPDEGFKPSSGTVQELNFRSNKNVWGYFSVAAAGGLHEFADSQFGHCFSWGENREEAISNMVVALKELSIRGDFRTTVEYLIKLLETESFQMNRIDTGWLDRLIAEKVQAERPDTMLGVVCGALHVADVSLRNSVSNFLHSLERGQVLPAHTLLNTVDVELIYEGVKYVLKVTRQSPNSYVVIMNGSCVEVDVHRLSDGGLLLSYDGSSYTTYMKEEVDRYRITIGNKTCVFEKENDPSVMRSPSAGKLIQYIVEDGGHVFAGQCYAEIEVMKMVMTLTAVESGCIHYVKRPGAALDPGCVLAKMQLDNPSKVQQAELHTGSLPRIQSTALRGEKLHRVFHYVLDNLVNVMNGYCLPDPFFSSKVKDWVERLMKTLRDPSLPLLELQDIMTSVSGRIPPNVEKSIKKEMAQYASNITSVLCQFPSQQIANILDSHAATLNRKSEREVFFMNTQSIVQLVQRYRSGIRGHMKAVVMDLLRQYLRVETQFQNGHYDKCVFALREENKSDMNTVLNYIFSHAQVTKKNLLVTMLIDQLCGRDPTLTDELLNILTELTQLSKTTNAKVALRARQVLIASHLPSYELRHNQVESIFLSAIDMYGHQFCIENLQKLILSETSIFDVLPNFFYHSNQVVRMAALEVYVRRAYIAYELNSVQHRQLKDNTCVVEFQFMLPTSHPNRGNIPTLNRMSFSSNLNHYGMTHVASVSDVLLDNSFTPPCQRMGGMVSFRTFEDFVRIFDEVMGCFSDSPPQSPTFPEAGHTSLYDEDKVPRDEPIHILNVAIKTDCDIEDDRLAAMFREFTQQNKATLVDHGIRRLTFLVAQKDFRKQVNYEVDRRFHREFPKFFTFRARDKFEEDRIYRHLEPALAFQLELNRMRNFDLTAIPCANHKMHLYLGAAKVEVGTEVTDYRFFVRAIIRHSDLVTKEASFEYLQNEGERLLLEAMDELEVAFNNTNVRTDCNHIFLNFVPTVIMDPSKIEESVRSMVMRYGSRLWKLRVLQAELKINIRLTPTGKAIPIRLFLTNESGYYLDISLYKEVTDSRTAQIMFQAYGDKQGPLHGMLINTPYVTKDLLQSKRFQAQSLGTTYIYDIPEMFRQSLIKLWESMSTQAFLPSPPLPSDMLTYTELVLDDQGQLVHMNRLPGGNEIGMVAWKMTFKSPEYPEGRDIIVIGNDITYRIGSFGPQEDLLFLRASELARAEGIPRIYVSANSGARIGLAEEIRHMFHVAWVDPEDPYKGYRYLYLTPQDYKRVSALNSVHCEHVEDEGESRYKITDIIGKEEGIGPENLRGSGMIAGESSLAYNEIITISLVTCRAIGIGAYLVRLGQRTIQVENSHLILTGAGALNKVLGREVYTSNNQLGGIQIMHNNGVTHCTVCDDFEGVFTVLHWLSYMPKSVHSSVPLLNSKDPIDRIIEFVPTKTPYDPRWMLAGRPHPTQKGQWLSGFFDYGSFSEIMQPWAQTVVVGRARLGGIPVGVVAVETRTVELSIPADPANLDSEAKIIQQAGQVWFPDSAFKTYQAIKDFNREGLPLMVFANWRGFSGGMKDMYDQVLKFGAYIVDGLRECCQPVLVYIPPQAELRGGSWVVIDSSINPRHMEMYADRESRGSVLEPEGTVEIKFRRKDLVKTMRRVDPVYIHLAERLGTPELSTAERKELENKLKEREEFLIPIYHQVAVQFADLHDTPGRMQEKGVISDILDWKTSRTFFYWRLRRLLLEDLVKKKIHNANPELTDGQIQAMLRRWFVEVEGTVKAYVWDNNKDLAEWLEKQLTEEDGVHSVIEENIKCISRDYVLKQIRSLVQANPEVAMDSIIHMTQHISPTQRAEVIRILSTMDSPST</sequence>
<evidence type="ECO:0000250" key="1"/>
<evidence type="ECO:0000250" key="2">
    <source>
        <dbReference type="UniProtKB" id="P11497"/>
    </source>
</evidence>
<evidence type="ECO:0000250" key="3">
    <source>
        <dbReference type="UniProtKB" id="Q5SWU9"/>
    </source>
</evidence>
<evidence type="ECO:0000255" key="4">
    <source>
        <dbReference type="PROSITE-ProRule" id="PRU00409"/>
    </source>
</evidence>
<evidence type="ECO:0000255" key="5">
    <source>
        <dbReference type="PROSITE-ProRule" id="PRU00969"/>
    </source>
</evidence>
<evidence type="ECO:0000255" key="6">
    <source>
        <dbReference type="PROSITE-ProRule" id="PRU01066"/>
    </source>
</evidence>
<evidence type="ECO:0000255" key="7">
    <source>
        <dbReference type="PROSITE-ProRule" id="PRU01136"/>
    </source>
</evidence>
<evidence type="ECO:0000255" key="8">
    <source>
        <dbReference type="PROSITE-ProRule" id="PRU01137"/>
    </source>
</evidence>
<evidence type="ECO:0000255" key="9">
    <source>
        <dbReference type="PROSITE-ProRule" id="PRU01138"/>
    </source>
</evidence>
<evidence type="ECO:0000269" key="10">
    <source>
    </source>
</evidence>
<evidence type="ECO:0000269" key="11">
    <source>
    </source>
</evidence>
<evidence type="ECO:0000269" key="12">
    <source>
    </source>
</evidence>
<evidence type="ECO:0000269" key="13">
    <source>
    </source>
</evidence>
<evidence type="ECO:0000269" key="14">
    <source>
    </source>
</evidence>
<evidence type="ECO:0000269" key="15">
    <source>
    </source>
</evidence>
<evidence type="ECO:0000269" key="16">
    <source>
    </source>
</evidence>
<evidence type="ECO:0000269" key="17">
    <source>
    </source>
</evidence>
<evidence type="ECO:0000269" key="18">
    <source>
    </source>
</evidence>
<evidence type="ECO:0000269" key="19">
    <source>
    </source>
</evidence>
<evidence type="ECO:0000269" key="20">
    <source ref="9"/>
</evidence>
<evidence type="ECO:0000303" key="21">
    <source>
    </source>
</evidence>
<evidence type="ECO:0000303" key="22">
    <source>
    </source>
</evidence>
<evidence type="ECO:0000303" key="23">
    <source>
    </source>
</evidence>
<evidence type="ECO:0000305" key="24"/>
<evidence type="ECO:0000305" key="25">
    <source>
    </source>
</evidence>
<evidence type="ECO:0000305" key="26">
    <source>
    </source>
</evidence>
<evidence type="ECO:0000305" key="27">
    <source>
    </source>
</evidence>
<evidence type="ECO:0000312" key="28">
    <source>
        <dbReference type="HGNC" id="HGNC:84"/>
    </source>
</evidence>
<evidence type="ECO:0007744" key="29">
    <source>
    </source>
</evidence>
<evidence type="ECO:0007744" key="30">
    <source>
    </source>
</evidence>
<evidence type="ECO:0007744" key="31">
    <source>
    </source>
</evidence>
<evidence type="ECO:0007744" key="32">
    <source>
    </source>
</evidence>
<evidence type="ECO:0007744" key="33">
    <source>
    </source>
</evidence>
<evidence type="ECO:0007744" key="34">
    <source>
    </source>
</evidence>
<evidence type="ECO:0007744" key="35">
    <source>
    </source>
</evidence>
<evidence type="ECO:0007744" key="36">
    <source>
    </source>
</evidence>
<evidence type="ECO:0007744" key="37">
    <source>
    </source>
</evidence>
<evidence type="ECO:0007744" key="38">
    <source>
    </source>
</evidence>
<evidence type="ECO:0007744" key="39">
    <source>
    </source>
</evidence>
<evidence type="ECO:0007829" key="40">
    <source>
        <dbReference type="PDB" id="2YL2"/>
    </source>
</evidence>
<evidence type="ECO:0007829" key="41">
    <source>
        <dbReference type="PDB" id="4ASI"/>
    </source>
</evidence>
<evidence type="ECO:0007829" key="42">
    <source>
        <dbReference type="PDB" id="8XKZ"/>
    </source>
</evidence>